<dbReference type="EMBL" id="K03455">
    <property type="protein sequence ID" value="AAB50262.1"/>
    <property type="molecule type" value="Genomic_RNA"/>
</dbReference>
<dbReference type="EMBL" id="AF038399">
    <property type="protein sequence ID" value="AAB99976.1"/>
    <property type="molecule type" value="Genomic_DNA"/>
</dbReference>
<dbReference type="EMBL" id="AF033819">
    <property type="protein sequence ID" value="AAC82596.1"/>
    <property type="molecule type" value="Genomic_RNA"/>
</dbReference>
<dbReference type="RefSeq" id="NP_057856.1">
    <property type="nucleotide sequence ID" value="NC_001802.1"/>
</dbReference>
<dbReference type="PDB" id="1AIK">
    <property type="method" value="X-ray"/>
    <property type="resolution" value="2.00 A"/>
    <property type="chains" value="C=628-661, N=546-581"/>
</dbReference>
<dbReference type="PDB" id="1DF4">
    <property type="method" value="X-ray"/>
    <property type="resolution" value="1.45 A"/>
    <property type="chains" value="A=546-579, A=628-655"/>
</dbReference>
<dbReference type="PDB" id="1DF5">
    <property type="method" value="X-ray"/>
    <property type="resolution" value="2.70 A"/>
    <property type="chains" value="A=546-579, A=628-655"/>
</dbReference>
<dbReference type="PDB" id="1DLB">
    <property type="method" value="X-ray"/>
    <property type="resolution" value="2.00 A"/>
    <property type="chains" value="A=546-579, A=628-655"/>
</dbReference>
<dbReference type="PDB" id="1FAV">
    <property type="method" value="X-ray"/>
    <property type="resolution" value="3.00 A"/>
    <property type="chains" value="C=636-665"/>
</dbReference>
<dbReference type="PDB" id="1G9M">
    <property type="method" value="X-ray"/>
    <property type="resolution" value="2.20 A"/>
    <property type="chains" value="G=83-127, G=195-297, G=330-492"/>
</dbReference>
<dbReference type="PDB" id="1GC1">
    <property type="method" value="X-ray"/>
    <property type="resolution" value="2.50 A"/>
    <property type="chains" value="G=83-127, G=195-297, G=330-396, G=410-492"/>
</dbReference>
<dbReference type="PDB" id="1GZL">
    <property type="method" value="X-ray"/>
    <property type="resolution" value="1.80 A"/>
    <property type="chains" value="A/B=565-581, C/D=628-639"/>
</dbReference>
<dbReference type="PDB" id="1K33">
    <property type="method" value="X-ray"/>
    <property type="resolution" value="1.75 A"/>
    <property type="chains" value="A=546-579, A=628-655"/>
</dbReference>
<dbReference type="PDB" id="1K34">
    <property type="method" value="X-ray"/>
    <property type="resolution" value="1.88 A"/>
    <property type="chains" value="A=546-579, A=628-655"/>
</dbReference>
<dbReference type="PDB" id="1MZI">
    <property type="method" value="NMR"/>
    <property type="chains" value="A=659-671"/>
</dbReference>
<dbReference type="PDB" id="1RZJ">
    <property type="method" value="X-ray"/>
    <property type="resolution" value="2.20 A"/>
    <property type="chains" value="G=195-492"/>
</dbReference>
<dbReference type="PDB" id="2CMR">
    <property type="method" value="X-ray"/>
    <property type="resolution" value="2.00 A"/>
    <property type="chains" value="A=543-662"/>
</dbReference>
<dbReference type="PDB" id="2ME1">
    <property type="method" value="NMR"/>
    <property type="chains" value="A=657-683"/>
</dbReference>
<dbReference type="PDB" id="2MG1">
    <property type="method" value="NMR"/>
    <property type="chains" value="A=683-704"/>
</dbReference>
<dbReference type="PDB" id="2MG2">
    <property type="method" value="NMR"/>
    <property type="chains" value="A=675-693"/>
</dbReference>
<dbReference type="PDB" id="2MG3">
    <property type="method" value="NMR"/>
    <property type="chains" value="A=675-693"/>
</dbReference>
<dbReference type="PDB" id="2NY7">
    <property type="method" value="X-ray"/>
    <property type="resolution" value="2.30 A"/>
    <property type="chains" value="G=83-492"/>
</dbReference>
<dbReference type="PDB" id="2PV6">
    <property type="method" value="NMR"/>
    <property type="chains" value="A=662-683"/>
</dbReference>
<dbReference type="PDB" id="2XRA">
    <property type="method" value="X-ray"/>
    <property type="resolution" value="2.30 A"/>
    <property type="chains" value="A=543-662"/>
</dbReference>
<dbReference type="PDB" id="3D0V">
    <property type="method" value="X-ray"/>
    <property type="resolution" value="2.05 A"/>
    <property type="chains" value="C=660-670"/>
</dbReference>
<dbReference type="PDB" id="3DNL">
    <property type="method" value="EM"/>
    <property type="resolution" value="20.00 A"/>
    <property type="chains" value="A/D/G=90-124, B/E/H=198-297, B/E/H=330-396, C/F/I=410-492"/>
</dbReference>
<dbReference type="PDB" id="3DNN">
    <property type="method" value="EM"/>
    <property type="resolution" value="20.00 A"/>
    <property type="chains" value="A/D/G=90-124, B/E/H=198-297, B/E/H=330-396, C/F/I=410-492"/>
</dbReference>
<dbReference type="PDB" id="3DNO">
    <property type="method" value="EM"/>
    <property type="resolution" value="20.00 A"/>
    <property type="chains" value="A/D/G=90-124, B/E/H=198-297, B/E/H=330-396, C/F/I=410-492"/>
</dbReference>
<dbReference type="PDB" id="3DRO">
    <property type="method" value="X-ray"/>
    <property type="resolution" value="3.90 A"/>
    <property type="chains" value="P=659-671"/>
</dbReference>
<dbReference type="PDB" id="3IDX">
    <property type="method" value="X-ray"/>
    <property type="resolution" value="2.50 A"/>
    <property type="chains" value="G=83-492"/>
</dbReference>
<dbReference type="PDB" id="3IDY">
    <property type="method" value="X-ray"/>
    <property type="resolution" value="3.20 A"/>
    <property type="chains" value="A/G=83-492"/>
</dbReference>
<dbReference type="PDB" id="3J70">
    <property type="method" value="EM"/>
    <property type="chains" value="D/P/U=31-500"/>
</dbReference>
<dbReference type="PDB" id="3MNZ">
    <property type="method" value="X-ray"/>
    <property type="resolution" value="1.80 A"/>
    <property type="chains" value="P=653-671"/>
</dbReference>
<dbReference type="PDB" id="3TYG">
    <property type="method" value="X-ray"/>
    <property type="resolution" value="3.25 A"/>
    <property type="chains" value="A=254-297, A=330-401"/>
</dbReference>
<dbReference type="PDB" id="3VIE">
    <property type="method" value="X-ray"/>
    <property type="resolution" value="1.80 A"/>
    <property type="chains" value="A/C/E=546-581"/>
</dbReference>
<dbReference type="PDB" id="4JPJ">
    <property type="method" value="X-ray"/>
    <property type="resolution" value="2.50 A"/>
    <property type="chains" value="A/B/C/D=254-399"/>
</dbReference>
<dbReference type="PDB" id="4JPK">
    <property type="method" value="X-ray"/>
    <property type="resolution" value="2.40 A"/>
    <property type="chains" value="A=254-399"/>
</dbReference>
<dbReference type="PDB" id="4YDV">
    <property type="method" value="X-ray"/>
    <property type="resolution" value="2.70 A"/>
    <property type="chains" value="P/Q=596-606"/>
</dbReference>
<dbReference type="PDB" id="4ZTO">
    <property type="method" value="X-ray"/>
    <property type="resolution" value="2.30 A"/>
    <property type="chains" value="P/Q=430-444"/>
</dbReference>
<dbReference type="PDB" id="5BN0">
    <property type="method" value="X-ray"/>
    <property type="resolution" value="2.80 A"/>
    <property type="chains" value="A/C/D=627-661, B/E/N=546-581"/>
</dbReference>
<dbReference type="PDB" id="5C0R">
    <property type="method" value="X-ray"/>
    <property type="resolution" value="3.19 A"/>
    <property type="chains" value="A=546-577, A=628-654"/>
</dbReference>
<dbReference type="PDB" id="5C0S">
    <property type="method" value="X-ray"/>
    <property type="resolution" value="4.30 A"/>
    <property type="chains" value="A=546-577, A=630-654"/>
</dbReference>
<dbReference type="PDB" id="5CIL">
    <property type="method" value="X-ray"/>
    <property type="resolution" value="1.81 A"/>
    <property type="chains" value="P=671-683"/>
</dbReference>
<dbReference type="PDB" id="5CIN">
    <property type="method" value="X-ray"/>
    <property type="resolution" value="1.70 A"/>
    <property type="chains" value="P=671-683"/>
</dbReference>
<dbReference type="PDB" id="5CMU">
    <property type="method" value="X-ray"/>
    <property type="resolution" value="2.11 A"/>
    <property type="chains" value="A/B/C=546-635"/>
</dbReference>
<dbReference type="PDB" id="5CMZ">
    <property type="method" value="X-ray"/>
    <property type="resolution" value="2.57 A"/>
    <property type="chains" value="A/C=546-590"/>
</dbReference>
<dbReference type="PDB" id="5CN0">
    <property type="method" value="X-ray"/>
    <property type="resolution" value="1.90 A"/>
    <property type="chains" value="A=546-581"/>
</dbReference>
<dbReference type="PDB" id="5DD0">
    <property type="method" value="X-ray"/>
    <property type="resolution" value="2.49 A"/>
    <property type="chains" value="P=660-670"/>
</dbReference>
<dbReference type="PDB" id="5GHW">
    <property type="method" value="X-ray"/>
    <property type="resolution" value="2.40 A"/>
    <property type="chains" value="P=664-690"/>
</dbReference>
<dbReference type="PDB" id="5H0N">
    <property type="method" value="X-ray"/>
    <property type="resolution" value="2.80 A"/>
    <property type="chains" value="A/C/E/G/I/K=536-581"/>
</dbReference>
<dbReference type="PDB" id="5HFL">
    <property type="method" value="X-ray"/>
    <property type="resolution" value="2.29 A"/>
    <property type="chains" value="A/B/C/D/E/F=546-581"/>
</dbReference>
<dbReference type="PDB" id="5HM1">
    <property type="method" value="X-ray"/>
    <property type="resolution" value="2.96 A"/>
    <property type="chains" value="D/E/F=582-596"/>
</dbReference>
<dbReference type="PDB" id="5IVX">
    <property type="method" value="X-ray"/>
    <property type="resolution" value="2.10 A"/>
    <property type="chains" value="P=311-320"/>
</dbReference>
<dbReference type="PDB" id="5KA5">
    <property type="method" value="X-ray"/>
    <property type="resolution" value="1.80 A"/>
    <property type="chains" value="A=543-582, A=625-661"/>
</dbReference>
<dbReference type="PDB" id="5KA6">
    <property type="method" value="X-ray"/>
    <property type="resolution" value="1.85 A"/>
    <property type="chains" value="A/B/C=543-582, A/B/C=625-661"/>
</dbReference>
<dbReference type="PDB" id="5NVP">
    <property type="method" value="NMR"/>
    <property type="chains" value="A=655-671"/>
</dbReference>
<dbReference type="PDB" id="5NWU">
    <property type="method" value="NMR"/>
    <property type="chains" value="A=514-528, A=655-671"/>
</dbReference>
<dbReference type="PDB" id="5NWW">
    <property type="method" value="NMR"/>
    <property type="chains" value="A=655-671"/>
</dbReference>
<dbReference type="PDB" id="5TKJ">
    <property type="method" value="X-ray"/>
    <property type="resolution" value="2.12 A"/>
    <property type="chains" value="C/F/I/L=512-519"/>
</dbReference>
<dbReference type="PDB" id="5TKK">
    <property type="method" value="X-ray"/>
    <property type="resolution" value="1.55 A"/>
    <property type="chains" value="A=512-519"/>
</dbReference>
<dbReference type="PDB" id="5WDF">
    <property type="method" value="X-ray"/>
    <property type="resolution" value="3.10 A"/>
    <property type="chains" value="P/Q=668-683"/>
</dbReference>
<dbReference type="PDB" id="5X08">
    <property type="method" value="X-ray"/>
    <property type="resolution" value="1.49 A"/>
    <property type="chains" value="P=671-683"/>
</dbReference>
<dbReference type="PDB" id="5YB2">
    <property type="method" value="X-ray"/>
    <property type="resolution" value="3.80 A"/>
    <property type="chains" value="A/B/C/D/E/F/M=538-581"/>
</dbReference>
<dbReference type="PDB" id="5YB3">
    <property type="method" value="X-ray"/>
    <property type="resolution" value="2.04 A"/>
    <property type="chains" value="D/E/F=546-581"/>
</dbReference>
<dbReference type="PDB" id="5YB4">
    <property type="method" value="X-ray"/>
    <property type="resolution" value="2.50 A"/>
    <property type="chains" value="D/E/F=546-581"/>
</dbReference>
<dbReference type="PDB" id="5YC0">
    <property type="method" value="X-ray"/>
    <property type="resolution" value="2.00 A"/>
    <property type="chains" value="A/B/C/D/E/F=538-581"/>
</dbReference>
<dbReference type="PDB" id="5Z0W">
    <property type="method" value="X-ray"/>
    <property type="resolution" value="1.90 A"/>
    <property type="chains" value="E=546-581"/>
</dbReference>
<dbReference type="PDB" id="5ZCX">
    <property type="method" value="X-ray"/>
    <property type="resolution" value="2.30 A"/>
    <property type="chains" value="A/B/C=528-566, P/Q/W=638-673"/>
</dbReference>
<dbReference type="PDB" id="6B9K">
    <property type="method" value="NMR"/>
    <property type="chains" value="A=311-320"/>
</dbReference>
<dbReference type="PDB" id="6BXP">
    <property type="method" value="X-ray"/>
    <property type="resolution" value="1.45 A"/>
    <property type="chains" value="C=2-11"/>
</dbReference>
<dbReference type="PDB" id="6BXQ">
    <property type="method" value="X-ray"/>
    <property type="resolution" value="1.58 A"/>
    <property type="chains" value="A=2-11"/>
</dbReference>
<dbReference type="PDB" id="6DE7">
    <property type="method" value="X-ray"/>
    <property type="resolution" value="4.12 A"/>
    <property type="chains" value="B=512-664"/>
</dbReference>
<dbReference type="PDB" id="6DLN">
    <property type="method" value="NMR"/>
    <property type="chains" value="A/B/C=665-703"/>
</dbReference>
<dbReference type="PDB" id="6J5E">
    <property type="method" value="X-ray"/>
    <property type="resolution" value="2.33 A"/>
    <property type="chains" value="G/I/K=538-581"/>
</dbReference>
<dbReference type="PDB" id="6JQK">
    <property type="method" value="X-ray"/>
    <property type="resolution" value="1.50 A"/>
    <property type="chains" value="C=623-661, N=546-581"/>
</dbReference>
<dbReference type="PDB" id="6KTS">
    <property type="method" value="X-ray"/>
    <property type="resolution" value="1.65 A"/>
    <property type="chains" value="A/C/D=627-661, B/E/N=546-581"/>
</dbReference>
<dbReference type="PDB" id="6MQC">
    <property type="method" value="X-ray"/>
    <property type="resolution" value="1.99 A"/>
    <property type="chains" value="C/D=512-519"/>
</dbReference>
<dbReference type="PDB" id="6MQE">
    <property type="method" value="X-ray"/>
    <property type="resolution" value="2.46 A"/>
    <property type="chains" value="C/D=512-519"/>
</dbReference>
<dbReference type="PDB" id="6MQM">
    <property type="method" value="X-ray"/>
    <property type="resolution" value="3.48 A"/>
    <property type="chains" value="C/F/I/L=512-518"/>
</dbReference>
<dbReference type="PDB" id="6MQR">
    <property type="method" value="X-ray"/>
    <property type="resolution" value="2.45 A"/>
    <property type="chains" value="A=512-519"/>
</dbReference>
<dbReference type="PDB" id="6MQS">
    <property type="method" value="X-ray"/>
    <property type="resolution" value="3.00 A"/>
    <property type="chains" value="E/F=512-519"/>
</dbReference>
<dbReference type="PDB" id="6N16">
    <property type="method" value="X-ray"/>
    <property type="resolution" value="2.30 A"/>
    <property type="chains" value="E/F/G/I=512-519"/>
</dbReference>
<dbReference type="PDB" id="6NCP">
    <property type="method" value="X-ray"/>
    <property type="resolution" value="2.76 A"/>
    <property type="chains" value="E=512-520"/>
</dbReference>
<dbReference type="PDB" id="6NPR">
    <property type="method" value="X-ray"/>
    <property type="resolution" value="2.37 A"/>
    <property type="chains" value="P/R=311-320"/>
</dbReference>
<dbReference type="PDB" id="6O3G">
    <property type="method" value="X-ray"/>
    <property type="resolution" value="3.65 A"/>
    <property type="chains" value="G/I/Q/S=671-683"/>
</dbReference>
<dbReference type="PDB" id="6O3J">
    <property type="method" value="X-ray"/>
    <property type="resolution" value="3.42 A"/>
    <property type="chains" value="G/I=671-683"/>
</dbReference>
<dbReference type="PDB" id="6O3L">
    <property type="method" value="X-ray"/>
    <property type="resolution" value="1.98 A"/>
    <property type="chains" value="D/E=671-683"/>
</dbReference>
<dbReference type="PDB" id="6O42">
    <property type="method" value="X-ray"/>
    <property type="resolution" value="2.60 A"/>
    <property type="chains" value="G/I=671-683"/>
</dbReference>
<dbReference type="PDB" id="6P60">
    <property type="method" value="X-ray"/>
    <property type="resolution" value="2.50 A"/>
    <property type="chains" value="E/F/I/L=512-519"/>
</dbReference>
<dbReference type="PDB" id="6P7H">
    <property type="method" value="X-ray"/>
    <property type="resolution" value="1.78 A"/>
    <property type="chains" value="C=512-519"/>
</dbReference>
<dbReference type="PDB" id="6P8D">
    <property type="method" value="X-ray"/>
    <property type="resolution" value="2.10 A"/>
    <property type="chains" value="C/F=512-519"/>
</dbReference>
<dbReference type="PDB" id="6PDR">
    <property type="method" value="X-ray"/>
    <property type="resolution" value="1.55 A"/>
    <property type="chains" value="A=512-519"/>
</dbReference>
<dbReference type="PDB" id="6PDS">
    <property type="method" value="X-ray"/>
    <property type="resolution" value="1.89 A"/>
    <property type="chains" value="C/G=512-519"/>
</dbReference>
<dbReference type="PDB" id="6PDU">
    <property type="method" value="X-ray"/>
    <property type="resolution" value="1.95 A"/>
    <property type="chains" value="C=512-519"/>
</dbReference>
<dbReference type="PDB" id="6PEC">
    <property type="method" value="X-ray"/>
    <property type="resolution" value="1.75 A"/>
    <property type="chains" value="A=512-519"/>
</dbReference>
<dbReference type="PDB" id="6PEF">
    <property type="method" value="X-ray"/>
    <property type="resolution" value="2.00 A"/>
    <property type="chains" value="C/F=512-519"/>
</dbReference>
<dbReference type="PDB" id="6PSA">
    <property type="method" value="X-ray"/>
    <property type="resolution" value="1.30 A"/>
    <property type="chains" value="A=566-581"/>
</dbReference>
<dbReference type="PDB" id="6RYF">
    <property type="method" value="X-ray"/>
    <property type="resolution" value="1.72 A"/>
    <property type="chains" value="G=308-320"/>
</dbReference>
<dbReference type="PDB" id="6SNC">
    <property type="method" value="X-ray"/>
    <property type="resolution" value="3.20 A"/>
    <property type="chains" value="C/P=671-689"/>
</dbReference>
<dbReference type="PDB" id="6SND">
    <property type="method" value="X-ray"/>
    <property type="resolution" value="3.10 A"/>
    <property type="chains" value="C/P=671-689"/>
</dbReference>
<dbReference type="PDB" id="6SNE">
    <property type="method" value="X-ray"/>
    <property type="resolution" value="3.90 A"/>
    <property type="chains" value="J/N/O/P=649-711"/>
</dbReference>
<dbReference type="PDB" id="6UBI">
    <property type="method" value="X-ray"/>
    <property type="resolution" value="1.90 A"/>
    <property type="chains" value="C/F=512-519"/>
</dbReference>
<dbReference type="PDB" id="6UCE">
    <property type="method" value="X-ray"/>
    <property type="resolution" value="1.38 A"/>
    <property type="chains" value="C=512-519"/>
</dbReference>
<dbReference type="PDB" id="6UCF">
    <property type="method" value="X-ray"/>
    <property type="resolution" value="1.29 A"/>
    <property type="chains" value="A=512-519"/>
</dbReference>
<dbReference type="PDB" id="6UJU">
    <property type="method" value="NMR"/>
    <property type="chains" value="A/B/C=677-788"/>
</dbReference>
<dbReference type="PDB" id="6UJV">
    <property type="method" value="NMR"/>
    <property type="chains" value="A/B/C=660-788"/>
</dbReference>
<dbReference type="PDB" id="6WWC">
    <property type="method" value="X-ray"/>
    <property type="resolution" value="2.56 A"/>
    <property type="chains" value="C/F=512-519"/>
</dbReference>
<dbReference type="PDB" id="7AEJ">
    <property type="method" value="X-ray"/>
    <property type="resolution" value="3.80 A"/>
    <property type="chains" value="A/B/C=512-594, A/B/C=629-718"/>
</dbReference>
<dbReference type="PDB" id="7EKB">
    <property type="method" value="X-ray"/>
    <property type="resolution" value="1.45 A"/>
    <property type="chains" value="P=671-683"/>
</dbReference>
<dbReference type="PDB" id="7EKK">
    <property type="method" value="X-ray"/>
    <property type="resolution" value="1.70 A"/>
    <property type="chains" value="P=671-683"/>
</dbReference>
<dbReference type="PDB" id="7FF1">
    <property type="method" value="X-ray"/>
    <property type="resolution" value="1.69 A"/>
    <property type="chains" value="A/C/D=627-661, B/E/N=546-581"/>
</dbReference>
<dbReference type="PDB" id="7LOH">
    <property type="method" value="NMR"/>
    <property type="chains" value="A/B/C=677-856"/>
</dbReference>
<dbReference type="PDB" id="7LOI">
    <property type="method" value="NMR"/>
    <property type="chains" value="A/B/C=660-856"/>
</dbReference>
<dbReference type="PDB" id="7N05">
    <property type="method" value="X-ray"/>
    <property type="resolution" value="1.70 A"/>
    <property type="chains" value="E=596-610"/>
</dbReference>
<dbReference type="PDB" id="7N08">
    <property type="method" value="X-ray"/>
    <property type="resolution" value="2.00 A"/>
    <property type="chains" value="E/F/G=596-610"/>
</dbReference>
<dbReference type="PDB" id="7R73">
    <property type="method" value="X-ray"/>
    <property type="resolution" value="1.76 A"/>
    <property type="chains" value="G=44-64"/>
</dbReference>
<dbReference type="PDB" id="7R74">
    <property type="method" value="X-ray"/>
    <property type="resolution" value="2.76 A"/>
    <property type="chains" value="A/C=44-492"/>
</dbReference>
<dbReference type="PDB" id="7RDW">
    <property type="method" value="X-ray"/>
    <property type="resolution" value="3.55 A"/>
    <property type="chains" value="C/D/M/N=44-495"/>
</dbReference>
<dbReference type="PDB" id="8B6Y">
    <property type="method" value="NMR"/>
    <property type="chains" value="A=671-690"/>
</dbReference>
<dbReference type="PDB" id="8F3A">
    <property type="method" value="X-ray"/>
    <property type="resolution" value="1.20 A"/>
    <property type="chains" value="A/B/C=540-581"/>
</dbReference>
<dbReference type="PDB" id="8F3B">
    <property type="method" value="X-ray"/>
    <property type="resolution" value="2.00 A"/>
    <property type="chains" value="A/B/C=540-586"/>
</dbReference>
<dbReference type="PDB" id="8FYM">
    <property type="method" value="X-ray"/>
    <property type="resolution" value="2.45 A"/>
    <property type="chains" value="C/F/J/P=667-683"/>
</dbReference>
<dbReference type="PDB" id="8FZ2">
    <property type="method" value="X-ray"/>
    <property type="resolution" value="3.50 A"/>
    <property type="chains" value="P=657-679"/>
</dbReference>
<dbReference type="PDB" id="8G8A">
    <property type="method" value="X-ray"/>
    <property type="resolution" value="2.44 A"/>
    <property type="chains" value="C/P=652-671"/>
</dbReference>
<dbReference type="PDB" id="8G8C">
    <property type="method" value="X-ray"/>
    <property type="resolution" value="2.08 A"/>
    <property type="chains" value="C/P=651-671"/>
</dbReference>
<dbReference type="PDB" id="8G8D">
    <property type="method" value="X-ray"/>
    <property type="resolution" value="2.02 A"/>
    <property type="chains" value="C/P=653-683"/>
</dbReference>
<dbReference type="PDB" id="8IPG">
    <property type="method" value="X-ray"/>
    <property type="resolution" value="1.64 A"/>
    <property type="chains" value="A/B/C=538-581"/>
</dbReference>
<dbReference type="PDB" id="8TQ7">
    <property type="method" value="X-ray"/>
    <property type="resolution" value="2.80 A"/>
    <property type="chains" value="E/P=311-320"/>
</dbReference>
<dbReference type="PDB" id="8TQ8">
    <property type="method" value="X-ray"/>
    <property type="resolution" value="2.69 A"/>
    <property type="chains" value="E/P=311-320"/>
</dbReference>
<dbReference type="PDB" id="8TQ9">
    <property type="method" value="X-ray"/>
    <property type="resolution" value="2.90 A"/>
    <property type="chains" value="P=311-320"/>
</dbReference>
<dbReference type="PDB" id="8W2Y">
    <property type="method" value="X-ray"/>
    <property type="resolution" value="1.63 A"/>
    <property type="chains" value="A=542-591"/>
</dbReference>
<dbReference type="PDB" id="8W32">
    <property type="method" value="X-ray"/>
    <property type="resolution" value="1.72 A"/>
    <property type="chains" value="A=542-591"/>
</dbReference>
<dbReference type="PDB" id="8W37">
    <property type="method" value="X-ray"/>
    <property type="resolution" value="2.07 A"/>
    <property type="chains" value="A=542-591"/>
</dbReference>
<dbReference type="PDB" id="9ARN">
    <property type="method" value="X-ray"/>
    <property type="resolution" value="1.41 A"/>
    <property type="chains" value="A=542-591"/>
</dbReference>
<dbReference type="PDB" id="9ARP">
    <property type="method" value="X-ray"/>
    <property type="resolution" value="2.04 A"/>
    <property type="chains" value="A/B=542-591"/>
</dbReference>
<dbReference type="PDBsum" id="1AIK"/>
<dbReference type="PDBsum" id="1DF4"/>
<dbReference type="PDBsum" id="1DF5"/>
<dbReference type="PDBsum" id="1DLB"/>
<dbReference type="PDBsum" id="1FAV"/>
<dbReference type="PDBsum" id="1G9M"/>
<dbReference type="PDBsum" id="1GC1"/>
<dbReference type="PDBsum" id="1GZL"/>
<dbReference type="PDBsum" id="1K33"/>
<dbReference type="PDBsum" id="1K34"/>
<dbReference type="PDBsum" id="1MZI"/>
<dbReference type="PDBsum" id="1RZJ"/>
<dbReference type="PDBsum" id="2CMR"/>
<dbReference type="PDBsum" id="2ME1"/>
<dbReference type="PDBsum" id="2MG1"/>
<dbReference type="PDBsum" id="2MG2"/>
<dbReference type="PDBsum" id="2MG3"/>
<dbReference type="PDBsum" id="2NY7"/>
<dbReference type="PDBsum" id="2PV6"/>
<dbReference type="PDBsum" id="2XRA"/>
<dbReference type="PDBsum" id="3D0V"/>
<dbReference type="PDBsum" id="3DNL"/>
<dbReference type="PDBsum" id="3DNN"/>
<dbReference type="PDBsum" id="3DNO"/>
<dbReference type="PDBsum" id="3DRO"/>
<dbReference type="PDBsum" id="3IDX"/>
<dbReference type="PDBsum" id="3IDY"/>
<dbReference type="PDBsum" id="3J70"/>
<dbReference type="PDBsum" id="3MNZ"/>
<dbReference type="PDBsum" id="3TYG"/>
<dbReference type="PDBsum" id="3VIE"/>
<dbReference type="PDBsum" id="4JPJ"/>
<dbReference type="PDBsum" id="4JPK"/>
<dbReference type="PDBsum" id="4YDV"/>
<dbReference type="PDBsum" id="4ZTO"/>
<dbReference type="PDBsum" id="5BN0"/>
<dbReference type="PDBsum" id="5C0R"/>
<dbReference type="PDBsum" id="5C0S"/>
<dbReference type="PDBsum" id="5CIL"/>
<dbReference type="PDBsum" id="5CIN"/>
<dbReference type="PDBsum" id="5CMU"/>
<dbReference type="PDBsum" id="5CMZ"/>
<dbReference type="PDBsum" id="5CN0"/>
<dbReference type="PDBsum" id="5DD0"/>
<dbReference type="PDBsum" id="5GHW"/>
<dbReference type="PDBsum" id="5H0N"/>
<dbReference type="PDBsum" id="5HFL"/>
<dbReference type="PDBsum" id="5HM1"/>
<dbReference type="PDBsum" id="5IVX"/>
<dbReference type="PDBsum" id="5KA5"/>
<dbReference type="PDBsum" id="5KA6"/>
<dbReference type="PDBsum" id="5NVP"/>
<dbReference type="PDBsum" id="5NWU"/>
<dbReference type="PDBsum" id="5NWW"/>
<dbReference type="PDBsum" id="5TKJ"/>
<dbReference type="PDBsum" id="5TKK"/>
<dbReference type="PDBsum" id="5WDF"/>
<dbReference type="PDBsum" id="5X08"/>
<dbReference type="PDBsum" id="5YB2"/>
<dbReference type="PDBsum" id="5YB3"/>
<dbReference type="PDBsum" id="5YB4"/>
<dbReference type="PDBsum" id="5YC0"/>
<dbReference type="PDBsum" id="5Z0W"/>
<dbReference type="PDBsum" id="5ZCX"/>
<dbReference type="PDBsum" id="6B9K"/>
<dbReference type="PDBsum" id="6BXP"/>
<dbReference type="PDBsum" id="6BXQ"/>
<dbReference type="PDBsum" id="6DE7"/>
<dbReference type="PDBsum" id="6DLN"/>
<dbReference type="PDBsum" id="6J5E"/>
<dbReference type="PDBsum" id="6JQK"/>
<dbReference type="PDBsum" id="6KTS"/>
<dbReference type="PDBsum" id="6MQC"/>
<dbReference type="PDBsum" id="6MQE"/>
<dbReference type="PDBsum" id="6MQM"/>
<dbReference type="PDBsum" id="6MQR"/>
<dbReference type="PDBsum" id="6MQS"/>
<dbReference type="PDBsum" id="6N16"/>
<dbReference type="PDBsum" id="6NCP"/>
<dbReference type="PDBsum" id="6NPR"/>
<dbReference type="PDBsum" id="6O3G"/>
<dbReference type="PDBsum" id="6O3J"/>
<dbReference type="PDBsum" id="6O3L"/>
<dbReference type="PDBsum" id="6O42"/>
<dbReference type="PDBsum" id="6P60"/>
<dbReference type="PDBsum" id="6P7H"/>
<dbReference type="PDBsum" id="6P8D"/>
<dbReference type="PDBsum" id="6PDR"/>
<dbReference type="PDBsum" id="6PDS"/>
<dbReference type="PDBsum" id="6PDU"/>
<dbReference type="PDBsum" id="6PEC"/>
<dbReference type="PDBsum" id="6PEF"/>
<dbReference type="PDBsum" id="6PSA"/>
<dbReference type="PDBsum" id="6RYF"/>
<dbReference type="PDBsum" id="6SNC"/>
<dbReference type="PDBsum" id="6SND"/>
<dbReference type="PDBsum" id="6SNE"/>
<dbReference type="PDBsum" id="6UBI"/>
<dbReference type="PDBsum" id="6UCE"/>
<dbReference type="PDBsum" id="6UCF"/>
<dbReference type="PDBsum" id="6UJU"/>
<dbReference type="PDBsum" id="6UJV"/>
<dbReference type="PDBsum" id="6WWC"/>
<dbReference type="PDBsum" id="7AEJ"/>
<dbReference type="PDBsum" id="7EKB"/>
<dbReference type="PDBsum" id="7EKK"/>
<dbReference type="PDBsum" id="7FF1"/>
<dbReference type="PDBsum" id="7LOH"/>
<dbReference type="PDBsum" id="7LOI"/>
<dbReference type="PDBsum" id="7N05"/>
<dbReference type="PDBsum" id="7N08"/>
<dbReference type="PDBsum" id="7R73"/>
<dbReference type="PDBsum" id="7R74"/>
<dbReference type="PDBsum" id="7RDW"/>
<dbReference type="PDBsum" id="8B6Y"/>
<dbReference type="PDBsum" id="8F3A"/>
<dbReference type="PDBsum" id="8F3B"/>
<dbReference type="PDBsum" id="8FYM"/>
<dbReference type="PDBsum" id="8FZ2"/>
<dbReference type="PDBsum" id="8G8A"/>
<dbReference type="PDBsum" id="8G8C"/>
<dbReference type="PDBsum" id="8G8D"/>
<dbReference type="PDBsum" id="8IPG"/>
<dbReference type="PDBsum" id="8TQ7"/>
<dbReference type="PDBsum" id="8TQ8"/>
<dbReference type="PDBsum" id="8TQ9"/>
<dbReference type="PDBsum" id="8W2Y"/>
<dbReference type="PDBsum" id="8W32"/>
<dbReference type="PDBsum" id="8W37"/>
<dbReference type="PDBsum" id="9ARN"/>
<dbReference type="PDBsum" id="9ARP"/>
<dbReference type="BMRB" id="P04578"/>
<dbReference type="SMR" id="P04578"/>
<dbReference type="BioGRID" id="1205544">
    <property type="interactions" value="160"/>
</dbReference>
<dbReference type="DIP" id="DIP-58525N"/>
<dbReference type="IntAct" id="P04578">
    <property type="interactions" value="141"/>
</dbReference>
<dbReference type="MINT" id="P04578"/>
<dbReference type="BindingDB" id="P04578"/>
<dbReference type="ChEMBL" id="CHEMBL3520"/>
<dbReference type="TCDB" id="1.G.16.1.3">
    <property type="family name" value="the human immunodeficiency virus type 1 (hiv-1) fusion peptide (hiv-fp) family"/>
</dbReference>
<dbReference type="GlyCosmos" id="P04578">
    <property type="glycosylation" value="29 sites, No reported glycans"/>
</dbReference>
<dbReference type="iPTMnet" id="P04578"/>
<dbReference type="SwissPalm" id="P04578"/>
<dbReference type="ABCD" id="P04578">
    <property type="antibodies" value="60 sequenced antibodies"/>
</dbReference>
<dbReference type="GeneID" id="155971"/>
<dbReference type="KEGG" id="vg:155971"/>
<dbReference type="Reactome" id="R-HSA-1462054">
    <property type="pathway name" value="Alpha-defensins"/>
</dbReference>
<dbReference type="Reactome" id="R-HSA-162588">
    <property type="pathway name" value="Budding and maturation of HIV virion"/>
</dbReference>
<dbReference type="Reactome" id="R-HSA-171286">
    <property type="pathway name" value="Synthesis and processing of ENV and VPU"/>
</dbReference>
<dbReference type="Reactome" id="R-HSA-173107">
    <property type="pathway name" value="Binding and entry of HIV virion"/>
</dbReference>
<dbReference type="Reactome" id="R-HSA-175474">
    <property type="pathway name" value="Assembly Of The HIV Virion"/>
</dbReference>
<dbReference type="Reactome" id="R-HSA-5621480">
    <property type="pathway name" value="Dectin-2 family"/>
</dbReference>
<dbReference type="EvolutionaryTrace" id="P04578"/>
<dbReference type="PRO" id="PR:P04578"/>
<dbReference type="Proteomes" id="UP000002241">
    <property type="component" value="Segment"/>
</dbReference>
<dbReference type="Proteomes" id="UP000105453">
    <property type="component" value="Segment"/>
</dbReference>
<dbReference type="Proteomes" id="UP000157732">
    <property type="component" value="Genome"/>
</dbReference>
<dbReference type="GO" id="GO:0044175">
    <property type="term" value="C:host cell endosome membrane"/>
    <property type="evidence" value="ECO:0007669"/>
    <property type="project" value="UniProtKB-SubCell"/>
</dbReference>
<dbReference type="GO" id="GO:0020002">
    <property type="term" value="C:host cell plasma membrane"/>
    <property type="evidence" value="ECO:0000314"/>
    <property type="project" value="UniProt"/>
</dbReference>
<dbReference type="GO" id="GO:0016020">
    <property type="term" value="C:membrane"/>
    <property type="evidence" value="ECO:0007669"/>
    <property type="project" value="UniProtKB-UniRule"/>
</dbReference>
<dbReference type="GO" id="GO:0019031">
    <property type="term" value="C:viral envelope"/>
    <property type="evidence" value="ECO:0007669"/>
    <property type="project" value="UniProtKB-KW"/>
</dbReference>
<dbReference type="GO" id="GO:0055036">
    <property type="term" value="C:virion membrane"/>
    <property type="evidence" value="ECO:0007669"/>
    <property type="project" value="UniProtKB-SubCell"/>
</dbReference>
<dbReference type="GO" id="GO:0048018">
    <property type="term" value="F:receptor ligand activity"/>
    <property type="evidence" value="ECO:0000314"/>
    <property type="project" value="UniProt"/>
</dbReference>
<dbReference type="GO" id="GO:0005198">
    <property type="term" value="F:structural molecule activity"/>
    <property type="evidence" value="ECO:0007669"/>
    <property type="project" value="UniProtKB-UniRule"/>
</dbReference>
<dbReference type="GO" id="GO:0007015">
    <property type="term" value="P:actin filament organization"/>
    <property type="evidence" value="ECO:0000314"/>
    <property type="project" value="UniProtKB"/>
</dbReference>
<dbReference type="GO" id="GO:0075512">
    <property type="term" value="P:clathrin-dependent endocytosis of virus by host cell"/>
    <property type="evidence" value="ECO:0007669"/>
    <property type="project" value="UniProtKB-UniRule"/>
</dbReference>
<dbReference type="GO" id="GO:0039654">
    <property type="term" value="P:fusion of virus membrane with host endosome membrane"/>
    <property type="evidence" value="ECO:0007669"/>
    <property type="project" value="UniProtKB-UniRule"/>
</dbReference>
<dbReference type="GO" id="GO:0019064">
    <property type="term" value="P:fusion of virus membrane with host plasma membrane"/>
    <property type="evidence" value="ECO:0007669"/>
    <property type="project" value="UniProtKB-UniRule"/>
</dbReference>
<dbReference type="GO" id="GO:1903905">
    <property type="term" value="P:positive regulation of establishment of T cell polarity"/>
    <property type="evidence" value="ECO:0000314"/>
    <property type="project" value="UniProtKB"/>
</dbReference>
<dbReference type="GO" id="GO:1903908">
    <property type="term" value="P:positive regulation of plasma membrane raft polarization"/>
    <property type="evidence" value="ECO:0000314"/>
    <property type="project" value="UniProtKB"/>
</dbReference>
<dbReference type="GO" id="GO:1903911">
    <property type="term" value="P:positive regulation of receptor clustering"/>
    <property type="evidence" value="ECO:0000314"/>
    <property type="project" value="UniProtKB"/>
</dbReference>
<dbReference type="GO" id="GO:0046718">
    <property type="term" value="P:symbiont entry into host cell"/>
    <property type="evidence" value="ECO:0000314"/>
    <property type="project" value="UniProt"/>
</dbReference>
<dbReference type="GO" id="GO:0042783">
    <property type="term" value="P:symbiont-mediated evasion of host immune response"/>
    <property type="evidence" value="ECO:0000269"/>
    <property type="project" value="DisProt"/>
</dbReference>
<dbReference type="GO" id="GO:0019082">
    <property type="term" value="P:viral protein processing"/>
    <property type="evidence" value="ECO:0007669"/>
    <property type="project" value="UniProtKB-UniRule"/>
</dbReference>
<dbReference type="GO" id="GO:0019062">
    <property type="term" value="P:virion attachment to host cell"/>
    <property type="evidence" value="ECO:0007669"/>
    <property type="project" value="UniProtKB-UniRule"/>
</dbReference>
<dbReference type="CDD" id="cd09909">
    <property type="entry name" value="HIV-1-like_HR1-HR2"/>
    <property type="match status" value="1"/>
</dbReference>
<dbReference type="FunFam" id="1.10.287.210:FF:000001">
    <property type="entry name" value="Envelope glycoprotein gp160"/>
    <property type="match status" value="1"/>
</dbReference>
<dbReference type="FunFam" id="1.20.5.490:FF:000001">
    <property type="entry name" value="Envelope glycoprotein gp160"/>
    <property type="match status" value="1"/>
</dbReference>
<dbReference type="FunFam" id="2.170.40.20:FF:000001">
    <property type="entry name" value="Envelope glycoprotein gp160"/>
    <property type="match status" value="1"/>
</dbReference>
<dbReference type="FunFam" id="2.170.40.20:FF:000003">
    <property type="entry name" value="Envelope glycoprotein gp160"/>
    <property type="match status" value="1"/>
</dbReference>
<dbReference type="Gene3D" id="1.10.287.210">
    <property type="match status" value="1"/>
</dbReference>
<dbReference type="Gene3D" id="2.170.40.20">
    <property type="entry name" value="Human immunodeficiency virus 1, Gp160, envelope glycoprotein"/>
    <property type="match status" value="2"/>
</dbReference>
<dbReference type="Gene3D" id="1.20.5.490">
    <property type="entry name" value="Single helix bin"/>
    <property type="match status" value="1"/>
</dbReference>
<dbReference type="HAMAP" id="MF_04083">
    <property type="entry name" value="HIV_ENV"/>
    <property type="match status" value="1"/>
</dbReference>
<dbReference type="InterPro" id="IPR036377">
    <property type="entry name" value="Gp120_core_sf"/>
</dbReference>
<dbReference type="InterPro" id="IPR037527">
    <property type="entry name" value="Gp160"/>
</dbReference>
<dbReference type="InterPro" id="IPR000328">
    <property type="entry name" value="GP41-like"/>
</dbReference>
<dbReference type="InterPro" id="IPR000777">
    <property type="entry name" value="HIV1_Gp120"/>
</dbReference>
<dbReference type="Pfam" id="PF00516">
    <property type="entry name" value="GP120"/>
    <property type="match status" value="1"/>
</dbReference>
<dbReference type="Pfam" id="PF00517">
    <property type="entry name" value="GP41"/>
    <property type="match status" value="1"/>
</dbReference>
<dbReference type="SUPFAM" id="SSF56502">
    <property type="entry name" value="gp120 core"/>
    <property type="match status" value="1"/>
</dbReference>
<dbReference type="SUPFAM" id="SSF58069">
    <property type="entry name" value="Virus ectodomain"/>
    <property type="match status" value="1"/>
</dbReference>
<sequence>MRVKEKYQHLWRWGWRWGTMLLGMLMICSATEKLWVTVYYGVPVWKEATTTLFCASDAKAYDTEVHNVWATHACVPTDPNPQEVVLVNVTENFNMWKNDMVEQMHEDIISLWDQSLKPCVKLTPLCVSLKCTDLKNDTNTNSSSGRMIMEKGEIKNCSFNISTSIRGKVQKEYAFFYKLDIIPIDNDTTSYKLTSCNTSVITQACPKVSFEPIPIHYCAPAGFAILKCNNKTFNGTGPCTNVSTVQCTHGIRPVVSTQLLLNGSLAEEEVVIRSVNFTDNAKTIIVQLNTSVEINCTRPNNNTRKRIRIQRGPGRAFVTIGKIGNMRQAHCNISRAKWNNTLKQIASKLREQFGNNKTIIFKQSSGGDPEIVTHSFNCGGEFFYCNSTQLFNSTWFNSTWSTEGSNNTEGSDTITLPCRIKQIINMWQKVGKAMYAPPISGQIRCSSNITGLLLTRDGGNSNNESEIFRPGGGDMRDNWRSELYKYKVVKIEPLGVAPTKAKRRVVQREKRAVGIGALFLGFLGAAGSTMGAASMTLTVQARQLLSGIVQQQNNLLRAIEAQQHLLQLTVWGIKQLQARILAVERYLKDQQLLGIWGCSGKLICTTAVPWNASWSNKSLEQIWNHTTWMEWDREINNYTSLIHSLIEESQNQQEKNEQELLELDKWASLWNWFNITNWLWYIKLFIMIVGGLVGLRIVFAVLSIVNRVRQGYSPLSFQTHLPTPRGPDRPEGIEEEGGERDRDRSIRLVNGSLALIWDDLRSLCLFSYHRLRDLLLIVTRIVELLGRRGWEALKYWWNLLQYWSQELKNSAVSLLNATAIAVAEGTDRVIEVVQGACRAIRHIPRRIRQGLERILL</sequence>
<protein>
    <recommendedName>
        <fullName evidence="1">Envelope glycoprotein gp160</fullName>
    </recommendedName>
    <alternativeName>
        <fullName evidence="1">Env polyprotein</fullName>
    </alternativeName>
    <component>
        <recommendedName>
            <fullName evidence="1">Surface protein gp120</fullName>
            <shortName evidence="1">SU</shortName>
        </recommendedName>
        <alternativeName>
            <fullName evidence="1">Glycoprotein 120</fullName>
            <shortName evidence="1">gp120</shortName>
        </alternativeName>
    </component>
    <component>
        <recommendedName>
            <fullName evidence="1">Transmembrane protein gp41</fullName>
            <shortName evidence="1">TM</shortName>
        </recommendedName>
        <alternativeName>
            <fullName evidence="1">Glycoprotein 41</fullName>
            <shortName evidence="1">gp41</shortName>
        </alternativeName>
    </component>
</protein>
<reference key="1">
    <citation type="journal article" date="1987" name="AIDS Res. Hum. Retroviruses">
        <title>Complete nucleotide sequences of functional clones of the AIDS virus.</title>
        <authorList>
            <person name="Ratner L."/>
            <person name="Fisher A."/>
            <person name="Jagodzinski L.L."/>
            <person name="Mitsuya H."/>
            <person name="Liou R.-S."/>
            <person name="Gallo R.C."/>
            <person name="Wong-Staal F."/>
        </authorList>
    </citation>
    <scope>NUCLEOTIDE SEQUENCE [GENOMIC RNA]</scope>
</reference>
<reference key="2">
    <citation type="submission" date="1997-04" db="EMBL/GenBank/DDBJ databases">
        <authorList>
            <person name="Ratner L."/>
            <person name="Fisher A."/>
            <person name="Jagodzinski L.L."/>
            <person name="Mitsuya H."/>
            <person name="Liou R.-S."/>
            <person name="Gallo R.C."/>
            <person name="Wong-Staal F."/>
        </authorList>
    </citation>
    <scope>SEQUENCE REVISION</scope>
</reference>
<reference key="3">
    <citation type="journal article" date="1988" name="Cell">
        <title>Endoproteolytic cleavage of gp160 is required for the activation of human immunodeficiency virus.</title>
        <authorList>
            <person name="McCune J.M."/>
            <person name="Rabin L.B."/>
            <person name="Feinberg M.B."/>
            <person name="Lieberman M."/>
            <person name="Kosek J.C."/>
            <person name="Reyes G.R."/>
            <person name="Weissman I.L."/>
        </authorList>
    </citation>
    <scope>FUNCTION (ENVELOPE GLYCOPROTEIN GP160)</scope>
</reference>
<reference key="4">
    <citation type="journal article" date="1990" name="J. Virol.">
        <title>Changes in the transmembrane region of the human immunodeficiency virus type 1 gp41 envelope glycoprotein affect membrane fusion.</title>
        <authorList>
            <person name="Helseth E."/>
            <person name="Olshevsky U."/>
            <person name="Gabuzda D."/>
            <person name="Ardman B."/>
            <person name="Haseltine W."/>
            <person name="Sodroski J."/>
        </authorList>
    </citation>
    <scope>FUNCTION (TRANSMEMBRANE PROTEIN GP41)</scope>
</reference>
<reference key="5">
    <citation type="journal article" date="1992" name="Nature">
        <title>Inhibition of furin-mediated cleavage activation of HIV-1 glycoprotein gp160.</title>
        <authorList>
            <person name="Hallenberger S."/>
            <person name="Bosch V."/>
            <person name="Angliker H."/>
            <person name="Shaw E."/>
            <person name="Klenk H.D."/>
            <person name="Garten W."/>
        </authorList>
    </citation>
    <scope>FUNCTION (ENVELOPE GLYCOPROTEIN GP160)</scope>
</reference>
<reference key="6">
    <citation type="journal article" date="1994" name="AIDS">
        <title>The immunosuppressive peptide of HIV-1: functional domains and immune response in AIDS patients.</title>
        <authorList>
            <person name="Denner J."/>
            <person name="Norley S."/>
            <person name="Kurth R."/>
        </authorList>
    </citation>
    <scope>IMMUNOSUPPRESSIVE REGION</scope>
</reference>
<reference key="7">
    <citation type="journal article" date="1995" name="Proc. Natl. Acad. Sci. U.S.A.">
        <title>The human and simian immunodeficiency virus envelope glycoprotein transmembrane subunits are palmitoylated.</title>
        <authorList>
            <person name="Yang C."/>
            <person name="Spies C.P."/>
            <person name="Compans R.W."/>
        </authorList>
    </citation>
    <scope>PALMITOYLATION AT CYS-764 AND CYS-837</scope>
    <scope>MUTAGENESIS OF CYS-764 AND CYS-837</scope>
</reference>
<reference key="8">
    <citation type="journal article" date="1995" name="J. Virol.">
        <title>Human immunodeficiency virus type 1 infection of SK-N-MC cells: domains of gp120 involved in entry into a CD4-negative, galactosyl ceramide/3' sulfo-galactosyl ceramide-positive cell line.</title>
        <authorList>
            <person name="Harouse J.M."/>
            <person name="Collman R.G."/>
            <person name="Gonzalez-Scarano F."/>
        </authorList>
    </citation>
    <scope>INTERACTION OF SURFACE PROTEIN GP120 WITH GALACTOSYL CERAMIDE AND SULFO-GALACTOSYL CERAMIDE</scope>
</reference>
<reference key="9">
    <citation type="journal article" date="1999" name="J. Virol.">
        <title>Polarized human immunodeficiency virus budding in lymphocytes involves a tyrosine-based signal and favors cell-to-cell viral transmission.</title>
        <authorList>
            <person name="Deschambeault J."/>
            <person name="Lalonde J.P."/>
            <person name="Cervantes-Acosta G."/>
            <person name="Lodge R."/>
            <person name="Cohen E.A."/>
            <person name="Lemay G."/>
        </authorList>
    </citation>
    <scope>DOMAIN YXXL MOTIF</scope>
</reference>
<reference key="10">
    <citation type="journal article" date="2001" name="J. Exp. Med.">
        <title>A dendritic cell-specific intercellular adhesion molecule 3-grabbing nonintegrin (DC-SIGN)-related protein is highly expressed on human liver sinusoidal endothelial cells and promotes HIV-1 infection.</title>
        <authorList>
            <person name="Bashirova A.A."/>
            <person name="Geijtenbeek T.B.H."/>
            <person name="van Duijnhoven G.C.F."/>
            <person name="van Vliet S.J."/>
            <person name="Eilering J.B.G."/>
            <person name="Martin M.P."/>
            <person name="Wu L."/>
            <person name="Martin T.D."/>
            <person name="Viebig N."/>
            <person name="Knolle P.A."/>
            <person name="Kewalramani V.N."/>
            <person name="van Kooyk Y."/>
            <person name="Carrington M."/>
        </authorList>
    </citation>
    <scope>FUNCTION (SURFACE PROTEIN GP120)</scope>
</reference>
<reference key="11">
    <citation type="journal article" date="2003" name="APMIS">
        <title>Pathogens target DC-SIGN to influence their fate DC-SIGN functions as a pathogen receptor with broad specificity.</title>
        <authorList>
            <person name="Geijtenbeek T.B."/>
            <person name="van Kooyk Y."/>
        </authorList>
    </citation>
    <scope>REVIEW</scope>
</reference>
<reference key="12">
    <citation type="journal article" date="2003" name="J. Biol. Chem.">
        <title>Protein-disulfide isomerase-mediated reduction of two disulfide bonds of HIV envelope glycoprotein 120 occurs post-CXCR4 binding and is required for fusion.</title>
        <authorList>
            <person name="Barbouche R."/>
            <person name="Miquelis R."/>
            <person name="Jones I.M."/>
            <person name="Fenouillet E."/>
        </authorList>
    </citation>
    <scope>DISULFIDE BOND</scope>
</reference>
<reference key="13">
    <citation type="journal article" date="2003" name="J. Virol.">
        <title>Differential N-linked glycosylation of human immunodeficiency virus and Ebola virus envelope glycoproteins modulates interactions with DC-SIGN and DC-SIGNR.</title>
        <authorList>
            <person name="Lin G."/>
            <person name="Simmons G."/>
            <person name="Poehlmann S."/>
            <person name="Baribaud F."/>
            <person name="Ni H."/>
            <person name="Leslie G.J."/>
            <person name="Haggarty B.S."/>
            <person name="Bates P."/>
            <person name="Weissman D."/>
            <person name="Hoxie J.A."/>
            <person name="Doms R.W."/>
        </authorList>
    </citation>
    <scope>INTERACTION OF SURFACE PROTEIN GP120 WITH HOST CD209/DC-SIGN AND CLEC4M/DC-SIGNR</scope>
</reference>
<reference key="14">
    <citation type="journal article" date="2005" name="J. Virol.">
        <title>Stoichiometry of envelope glycoprotein trimers in the entry of human immunodeficiency virus type 1.</title>
        <authorList>
            <person name="Yang X."/>
            <person name="Kurteva S."/>
            <person name="Ren X."/>
            <person name="Lee S."/>
            <person name="Sodroski J."/>
        </authorList>
    </citation>
    <scope>STOICHIOMETRY (ENVELOPE GLYCOPROTEIN GP160)</scope>
</reference>
<reference key="15">
    <citation type="journal article" date="2003" name="Biochim. Biophys. Acta">
        <title>The HIV Env-mediated fusion reaction.</title>
        <authorList>
            <person name="Gallo S.A."/>
            <person name="Finnegan C.M."/>
            <person name="Viard M."/>
            <person name="Raviv Y."/>
            <person name="Dimitrov A."/>
            <person name="Rawat S.S."/>
            <person name="Puri A."/>
            <person name="Durell S."/>
            <person name="Blumenthal R."/>
        </authorList>
    </citation>
    <scope>REVIEW</scope>
</reference>
<reference key="16">
    <citation type="journal article" date="2005" name="Cell Death Differ.">
        <title>Mechanisms of apoptosis induction by the HIV-1 envelope.</title>
        <authorList>
            <person name="Perfettini J.-L."/>
            <person name="Castedo M."/>
            <person name="Roumier T."/>
            <person name="Andreau K."/>
            <person name="Nardacci R."/>
            <person name="Piacentini M."/>
            <person name="Kroemer G."/>
        </authorList>
    </citation>
    <scope>REVIEW</scope>
</reference>
<reference key="17">
    <citation type="journal article" date="2005" name="AIDS Res. Hum. Retroviruses">
        <title>V3: HIV's switch-hitter.</title>
        <authorList>
            <person name="Hartley O."/>
            <person name="Klasse P.J."/>
            <person name="Sattentau Q.J."/>
            <person name="Moore J.P."/>
        </authorList>
    </citation>
    <scope>REVIEW</scope>
</reference>
<reference key="18">
    <citation type="journal article" date="2005" name="Drugs">
        <title>Emerging drug targets for antiretroviral therapy.</title>
        <authorList>
            <person name="Reeves J.D."/>
            <person name="Piefer A.J."/>
        </authorList>
    </citation>
    <scope>REVIEW</scope>
</reference>
<reference key="19">
    <citation type="journal article" date="2006" name="EMBO J.">
        <title>HIV and the chemokine system: 10 years later.</title>
        <authorList>
            <person name="Lusso P."/>
        </authorList>
    </citation>
    <scope>REVIEW</scope>
</reference>
<reference key="20">
    <citation type="journal article" date="2007" name="Mol. Biol. Cell">
        <title>A conserved dileucine motif mediates clathrin and AP-2-dependent endocytosis of the HIV-1 envelope protein.</title>
        <authorList>
            <person name="Byland R."/>
            <person name="Vance P.J."/>
            <person name="Hoxie J.A."/>
            <person name="Marsh M."/>
        </authorList>
    </citation>
    <scope>DI-LEUCINE INTERNALIZATION MOTIF</scope>
</reference>
<reference key="21">
    <citation type="journal article" date="2008" name="Microbiol. Mol. Biol. Rev.">
        <title>The membrane-proximal external region of the human immunodeficiency virus type 1 envelope: dominant site of antibody neutralization and target for vaccine design.</title>
        <authorList>
            <person name="Montero M."/>
            <person name="van Houten N.E."/>
            <person name="Wang X."/>
            <person name="Scott J.K."/>
        </authorList>
    </citation>
    <scope>MEMBRANE-PROXIMAL EXTERNAL REGION</scope>
</reference>
<reference key="22">
    <citation type="journal article" date="2008" name="J. Biol. Chem.">
        <title>The HIV-1 envelope glycoprotein gp120 features four heparan sulfate binding domains, including the co-receptor binding site.</title>
        <authorList>
            <person name="Crublet E."/>
            <person name="Andrieu J.P."/>
            <person name="Vives R.R."/>
            <person name="Lortat-Jacob H."/>
        </authorList>
    </citation>
    <scope>INTERACTION OF SURFACE PROTEIN GP120 WITH HEPARAN SULFATE</scope>
    <source>
        <strain>HXBC2</strain>
    </source>
</reference>
<reference key="23">
    <citation type="journal article" date="2009" name="Cell">
        <title>HIV enters cells via endocytosis and dynamin-dependent fusion with endosomes.</title>
        <authorList>
            <person name="Miyauchi K."/>
            <person name="Kim Y."/>
            <person name="Latinovic O."/>
            <person name="Morozov V."/>
            <person name="Melikyan G.B."/>
        </authorList>
    </citation>
    <scope>FUNCTION</scope>
</reference>
<reference key="24">
    <citation type="journal article" date="2013" name="PLoS ONE">
        <title>Modulation of cytokine release and gene expression by the immunosuppressive domain of gp41 of HIV-1.</title>
        <authorList>
            <person name="Denner J."/>
            <person name="Eschricht M."/>
            <person name="Lauck M."/>
            <person name="Semaan M."/>
            <person name="Schlaermann P."/>
            <person name="Ryu H."/>
            <person name="Akyuez L."/>
        </authorList>
    </citation>
    <scope>IMMUNOSUPPRESSIVE REGION</scope>
</reference>
<reference key="25">
    <citation type="journal article" date="2016" name="Cell Rep.">
        <title>Composition and antigenic effects of individual glycan sites of a trimeric HIV-1 envelope glycoprotein.</title>
        <authorList>
            <person name="Behrens A.J."/>
            <person name="Vasiljevic S."/>
            <person name="Pritchard L.K."/>
            <person name="Harvey D.J."/>
            <person name="Andev R.S."/>
            <person name="Krumm S.A."/>
            <person name="Struwe W.B."/>
            <person name="Cupo A."/>
            <person name="Kumar A."/>
            <person name="Zitzmann N."/>
            <person name="Seabright G.E."/>
            <person name="Kramer H.B."/>
            <person name="Spencer D.I."/>
            <person name="Royle L."/>
            <person name="Lee J.H."/>
            <person name="Klasse P.J."/>
            <person name="Burton D.R."/>
            <person name="Wilson I.A."/>
            <person name="Ward A.B."/>
            <person name="Sanders R.W."/>
            <person name="Moore J.P."/>
            <person name="Doores K.J."/>
            <person name="Crispin M."/>
        </authorList>
    </citation>
    <scope>GLYCOSYLATION AT ASN-88; ASN-156; ASN-160; ASN-197; ASN-234; ASN-262; ASN-276; ASN-295; ASN-332; ASN-339; ASN-386; ASN-392; ASN-448; ASN-611 AND ASN-637</scope>
    <source>
        <strain>BG505</strain>
    </source>
</reference>
<reference key="26">
    <citation type="journal article" date="2017" name="Sci. Rep.">
        <title>Conformational heterogeneity of the HIV envelope glycan shield.</title>
        <authorList>
            <person name="Yang M."/>
            <person name="Huang J."/>
            <person name="Simon R."/>
            <person name="Wang L.X."/>
            <person name="MacKerell A.D. Jr."/>
        </authorList>
    </citation>
    <scope>GLYCOSYLATION</scope>
</reference>
<reference key="27">
    <citation type="journal article" date="2019" name="Cell Rep.">
        <title>Guanylate-binding proteins 2 and 5 exert broad antiviral activity by inhibiting furin-mediated processing of viral envelope proteins.</title>
        <authorList>
            <person name="Braun E."/>
            <person name="Hotter D."/>
            <person name="Koepke L."/>
            <person name="Zech F."/>
            <person name="Gross R."/>
            <person name="Sparrer K.M.J."/>
            <person name="Mueller J.A."/>
            <person name="Pfaller C.K."/>
            <person name="Heusinger E."/>
            <person name="Wombacher R."/>
            <person name="Sutter K."/>
            <person name="Dittmer U."/>
            <person name="Winkler M."/>
            <person name="Simmons G."/>
            <person name="Jakobsen M.R."/>
            <person name="Conzelmann K.K."/>
            <person name="Poehlmann S."/>
            <person name="Muench J."/>
            <person name="Fackler O.T."/>
            <person name="Kirchhoff F."/>
            <person name="Sauter D."/>
        </authorList>
    </citation>
    <scope>FUNCTION (ENVELOPE GLYCOPROTEIN GP160)</scope>
</reference>
<reference key="28">
    <citation type="journal article" date="1997" name="Cell">
        <title>Core structure of gp41 from the HIV envelope glycoprotein.</title>
        <authorList>
            <person name="Chan D.C."/>
            <person name="Fass D."/>
            <person name="Berger J.M."/>
            <person name="Kim P.S."/>
        </authorList>
    </citation>
    <scope>X-RAY CRYSTALLOGRAPHY (2.00 ANGSTROMS) OF 628-661 AND 546-581</scope>
</reference>
<reference key="29">
    <citation type="journal article" date="1998" name="Nature">
        <title>Structure of an HIV gp120 envelope glycoprotein in complex with the CD4 receptor and a neutralizing human antibody.</title>
        <authorList>
            <person name="Kwong P.D."/>
            <person name="Wyatt R."/>
            <person name="Robinson J."/>
            <person name="Sweet R.W."/>
            <person name="Sodroski J."/>
            <person name="Hendrickson W.A."/>
        </authorList>
    </citation>
    <scope>X-RAY CRYSTALLOGRAPHY (2.50 ANGSTROMS) OF 83-127; 195-297; 330-396 AND 410-492</scope>
    <scope>GLYCOSYLATION AT ASN-197; ASN-262; ASN-276; ASN-289; ASN-295; ASN-332; ASN-339; ASN-386; ASN-392 AND ASN-448</scope>
</reference>
<reference key="30">
    <citation type="journal article" date="2000" name="Biochemistry">
        <title>Helical interactions in the HIV-1 gp41 core reveal structural basis for the inhibitory activity of gp41 peptides.</title>
        <authorList>
            <person name="Shu W."/>
            <person name="Liu J."/>
            <person name="Ji H."/>
            <person name="Radigen L."/>
            <person name="Jiang S."/>
            <person name="Lu M."/>
        </authorList>
    </citation>
    <scope>X-RAY CRYSTALLOGRAPHY (2.00 ANGSTROMS) OF 546-579 AND 628-655</scope>
</reference>
<reference key="31">
    <citation type="journal article" date="2000" name="J. Biol. Chem.">
        <title>Interactions between HIV-1 gp41 core and detergents and their implications for membrane fusion.</title>
        <authorList>
            <person name="Shu W."/>
            <person name="Ji H."/>
            <person name="Lu M."/>
        </authorList>
    </citation>
    <scope>X-RAY CRYSTALLOGRAPHY (1.45 ANGSTROMS) OF 546-579 AND 628-655</scope>
</reference>
<reference key="32">
    <citation type="journal article" date="2000" name="Structure">
        <title>Structures of HIV-1 gp120 envelope glycoproteins from laboratory-adapted and primary isolates.</title>
        <authorList>
            <person name="Kwong P.D."/>
            <person name="Wyatt R."/>
            <person name="Majeed S."/>
            <person name="Robinson J."/>
            <person name="Sweet R.W."/>
            <person name="Sodroski J."/>
            <person name="Hendrickson W.A."/>
        </authorList>
    </citation>
    <scope>X-RAY CRYSTALLOGRAPHY (2.20 ANGSTROMS) OF 83-127; 195-297 AND 330-492</scope>
    <scope>GLYCOSYLATION AT ASN-197; ASN-234; ASN-262; ASN-276; ASN-289; ASN-295; ASN-339; ASN-386; ASN-392; ASN-448 AND ASN-463</scope>
</reference>
<reference key="33">
    <citation type="journal article" date="2002" name="Biochemistry">
        <title>Interhelical interactions in the gp41 core: implications for activation of HIV-1 membrane fusion.</title>
        <authorList>
            <person name="Wang S."/>
            <person name="York J."/>
            <person name="Shu W."/>
            <person name="Stoller M.O."/>
            <person name="Nunberg J.H."/>
            <person name="Lu M."/>
        </authorList>
    </citation>
    <scope>X-RAY CRYSTALLOGRAPHY (1.75 ANGSTROMS) OF 546-579 AND 628-655</scope>
</reference>
<reference key="34">
    <citation type="journal article" date="2002" name="Proc. Natl. Acad. Sci. U.S.A.">
        <title>Short constrained peptides that inhibit HIV-1 entry.</title>
        <authorList>
            <person name="Sia S.K."/>
            <person name="Carr P.A."/>
            <person name="Cochran A.G."/>
            <person name="Malashkevich V.N."/>
            <person name="Kim P.S."/>
        </authorList>
    </citation>
    <scope>X-RAY CRYSTALLOGRAPHY (1.80 ANGSTROMS) OF 565-581</scope>
</reference>
<reference key="35">
    <citation type="journal article" date="2003" name="J. Mol. Biol.">
        <title>Structural analysis of the epitope of the anti-HIV antibody 2F5 sheds light into its mechanism of neutralization and HIV fusion.</title>
        <authorList>
            <person name="Barbato G."/>
            <person name="Bianchi E."/>
            <person name="Ingallinella P."/>
            <person name="Hurni W.H."/>
            <person name="Miller M.D."/>
            <person name="Ciliberto G."/>
            <person name="Cortese R."/>
            <person name="Bazzo R."/>
            <person name="Shiver J.W."/>
            <person name="Pessi A."/>
        </authorList>
    </citation>
    <scope>STRUCTURE BY NMR OF 659-671</scope>
</reference>
<reference key="36">
    <citation type="journal article" date="2004" name="Proc. Natl. Acad. Sci. U.S.A.">
        <title>Structural basis of tyrosine sulfation and VH-gene usage in antibodies that recognize the HIV type 1 coreceptor-binding site on gp120.</title>
        <authorList>
            <person name="Huang C.C."/>
            <person name="Venturi M."/>
            <person name="Majeed S."/>
            <person name="Moore M.J."/>
            <person name="Phogat S."/>
            <person name="Zhang M.Y."/>
            <person name="Dimitrov D.S."/>
            <person name="Hendrickson W.A."/>
            <person name="Robinson J."/>
            <person name="Sodroski J."/>
            <person name="Wyatt R."/>
            <person name="Choe H."/>
            <person name="Farzan M."/>
            <person name="Kwong P.D."/>
        </authorList>
    </citation>
    <scope>X-RAY CRYSTALLOGRAPHY (2.20 ANGSTROMS) OF 195-492</scope>
    <scope>GLYCOSYLATION AT ASN-197; ASN-234; ASN-262; ASN-276; ASN-289; ASN-295; ASN-392; ASN-448 AND ASN-463</scope>
</reference>
<reference key="37">
    <citation type="journal article" date="2007" name="Nature">
        <title>Structural definition of a conserved neutralization epitope on HIV-1 gp120.</title>
        <authorList>
            <person name="Zhou T."/>
            <person name="Xu L."/>
            <person name="Dey B."/>
            <person name="Hessell A.J."/>
            <person name="Van Ryk D."/>
            <person name="Xiang S.H."/>
            <person name="Yang X."/>
            <person name="Zhang M.Y."/>
            <person name="Zwick M.B."/>
            <person name="Arthos J."/>
            <person name="Burton D.R."/>
            <person name="Dimitrov D.S."/>
            <person name="Sodroski J."/>
            <person name="Wyatt R."/>
            <person name="Nabel G.J."/>
            <person name="Kwong P.D."/>
        </authorList>
    </citation>
    <scope>X-RAY CRYSTALLOGRAPHY (2.30 ANGSTROMS) OF 83-492</scope>
    <scope>GLYCOSYLATION AT ASN-356</scope>
</reference>
<reference key="38">
    <citation type="journal article" date="2008" name="Immunity">
        <title>HIV-1 broadly neutralizing antibody extracts its epitope from a kinked gp41 ectodomain region on the viral membrane.</title>
        <authorList>
            <person name="Sun Z.Y."/>
            <person name="Oh K.J."/>
            <person name="Kim M."/>
            <person name="Yu J."/>
            <person name="Brusic V."/>
            <person name="Song L."/>
            <person name="Qiao Z."/>
            <person name="Wang J.H."/>
            <person name="Wagner G."/>
            <person name="Reinherz E.L."/>
        </authorList>
    </citation>
    <scope>STRUCTURE BY NMR OF 662-683</scope>
</reference>
<reference key="39">
    <citation type="journal article" date="2008" name="J. Mol. Biol.">
        <title>Structural details of HIV-1 recognition by the broadly neutralizing monoclonal antibody 2F5: epitope conformation, antigen-recognition loop mobility, and anion-binding site.</title>
        <authorList>
            <person name="Julien J.P."/>
            <person name="Bryson S."/>
            <person name="Nieva J.L."/>
            <person name="Pai E.F."/>
        </authorList>
    </citation>
    <scope>X-RAY CRYSTALLOGRAPHY (2.05 ANGSTROMS) OF 660-670</scope>
</reference>
<reference key="40">
    <citation type="journal article" date="2008" name="Nature">
        <title>Molecular architecture of native HIV-1 gp120 trimers.</title>
        <authorList>
            <person name="Liu J."/>
            <person name="Bartesaghi A."/>
            <person name="Borgnia M.J."/>
            <person name="Sapiro G."/>
            <person name="Subramaniam S."/>
        </authorList>
    </citation>
    <scope>STRUCTURE BY ELECTRON MICROSCOPY (20.00 ANGSTROMS) OF 90-124; 198-297; 330-396 AND 410-492</scope>
</reference>
<reference key="41">
    <citation type="journal article" date="2009" name="Science">
        <title>Structural basis of immune evasion at the site of CD4 attachment on HIV-1 gp120.</title>
        <authorList>
            <person name="Chen L."/>
            <person name="Kwon Y.D."/>
            <person name="Zhou T."/>
            <person name="Wu X."/>
            <person name="O'Dell S."/>
            <person name="Cavacini L."/>
            <person name="Hessell A.J."/>
            <person name="Pancera M."/>
            <person name="Tang M."/>
            <person name="Xu L."/>
            <person name="Yang Z.Y."/>
            <person name="Zhang M.Y."/>
            <person name="Arthos J."/>
            <person name="Burton D.R."/>
            <person name="Dimitrov D.S."/>
            <person name="Nabel G.J."/>
            <person name="Posner M.R."/>
            <person name="Sodroski J."/>
            <person name="Wyatt R."/>
            <person name="Mascola J.R."/>
            <person name="Kwong P.D."/>
        </authorList>
    </citation>
    <scope>X-RAY CRYSTALLOGRAPHY (2.50 ANGSTROMS) OF 83-492</scope>
    <scope>GLYCOSYLATION AT ASN-88 AND ASN-356</scope>
</reference>
<reference key="42">
    <citation type="journal article" date="2010" name="PLoS Pathog.">
        <title>Crystal structure and size-dependent neutralization properties of HK20, a human monoclonal antibody binding to the highly conserved heptad repeat 1 of gp41.</title>
        <authorList>
            <person name="Sabin C."/>
            <person name="Corti D."/>
            <person name="Buzon V."/>
            <person name="Seaman M.S."/>
            <person name="Lutje Hulsik D."/>
            <person name="Hinz A."/>
            <person name="Vanzetta F."/>
            <person name="Agatic G."/>
            <person name="Silacci C."/>
            <person name="Mainetti L."/>
            <person name="Scarlatti G."/>
            <person name="Sallusto F."/>
            <person name="Weiss R."/>
            <person name="Lanzavecchia A."/>
            <person name="Weissenhorn W."/>
        </authorList>
    </citation>
    <scope>X-RAY CRYSTALLOGRAPHY (2.30 ANGSTROMS) OF 543-582; 590-639; 625-662 AND 654-688</scope>
</reference>
<reference key="43">
    <citation type="journal article" date="2011" name="Science">
        <title>A potent and broad neutralizing antibody recognizes and penetrates the HIV glycan shield.</title>
        <authorList>
            <person name="Pejchal R."/>
            <person name="Doores K.J."/>
            <person name="Walker L.M."/>
            <person name="Khayat R."/>
            <person name="Huang P.S."/>
            <person name="Wang S.K."/>
            <person name="Stanfield R.L."/>
            <person name="Julien J.P."/>
            <person name="Ramos A."/>
            <person name="Crispin M."/>
            <person name="Depetris R."/>
            <person name="Katpally U."/>
            <person name="Marozsan A."/>
            <person name="Cupo A."/>
            <person name="Maloveste S."/>
            <person name="Liu Y."/>
            <person name="McBride R."/>
            <person name="Ito Y."/>
            <person name="Sanders R.W."/>
            <person name="Ogohara C."/>
            <person name="Paulson J.C."/>
            <person name="Feizi T."/>
            <person name="Scanlan C.N."/>
            <person name="Wong C.H."/>
            <person name="Moore J.P."/>
            <person name="Olson W.C."/>
            <person name="Ward A.B."/>
            <person name="Poignard P."/>
            <person name="Schief W.R."/>
            <person name="Burton D.R."/>
            <person name="Wilson I.A."/>
        </authorList>
    </citation>
    <scope>X-RAY CRYSTALLOGRAPHY (3.25 ANGSTROMS) OF 254-297; 330-401; 412-419 AND 445-477</scope>
    <scope>GLYCOSYLATION AT ASN-332</scope>
</reference>
<reference key="44">
    <citation type="journal article" date="2012" name="J. Biol. Chem.">
        <title>Broad antiviral activity and crystal structure of HIV-1 fusion inhibitor sifuvirtide.</title>
        <authorList>
            <person name="Yao X."/>
            <person name="Chong H."/>
            <person name="Zhang C."/>
            <person name="Waltersperger S."/>
            <person name="Wang M."/>
            <person name="Cui S."/>
            <person name="He Y."/>
        </authorList>
    </citation>
    <scope>X-RAY CRYSTALLOGRAPHY (1.80 ANGSTROMS) OF 546-581</scope>
</reference>
<reference key="45">
    <citation type="journal article" date="2013" name="Science">
        <title>Rational HIV immunogen design to target specific germline B cell receptors.</title>
        <authorList>
            <person name="Jardine J."/>
            <person name="Julien J.P."/>
            <person name="Menis S."/>
            <person name="Ota T."/>
            <person name="Kalyuzhniy O."/>
            <person name="McGuire A."/>
            <person name="Sok D."/>
            <person name="Huang P.S."/>
            <person name="MacPherson S."/>
            <person name="Jones M."/>
            <person name="Nieusma T."/>
            <person name="Mathison J."/>
            <person name="Baker D."/>
            <person name="Ward A.B."/>
            <person name="Burton D.R."/>
            <person name="Stamatatos L."/>
            <person name="Nemazee D."/>
            <person name="Wilson I.A."/>
            <person name="Schief W.R."/>
        </authorList>
    </citation>
    <scope>X-RAY CRYSTALLOGRAPHY (2.40 ANGSTROMS) OF 254-399</scope>
    <scope>GLYCOSYLATION AT ASN-262</scope>
</reference>
<reference key="46">
    <citation type="journal article" date="2014" name="J. Mol. Biol.">
        <title>Disruption of helix-capping residues 671 and 674 reveals a role in HIV-1 entry for a specialized hinge segment of the membrane proximal external region of gp41.</title>
        <authorList>
            <person name="Sun Z.Y."/>
            <person name="Cheng Y."/>
            <person name="Kim M."/>
            <person name="Song L."/>
            <person name="Choi J."/>
            <person name="Kudahl U.J."/>
            <person name="Brusic V."/>
            <person name="Chowdhury B."/>
            <person name="Yu L."/>
            <person name="Seaman M.S."/>
            <person name="Bellot G."/>
            <person name="Shih W.M."/>
            <person name="Wagner G."/>
            <person name="Reinherz E.L."/>
        </authorList>
    </citation>
    <scope>STRUCTURE BY NMR OF 657-683</scope>
</reference>
<organismHost>
    <name type="scientific">Homo sapiens</name>
    <name type="common">Human</name>
    <dbReference type="NCBI Taxonomy" id="9606"/>
</organismHost>
<organism>
    <name type="scientific">Human immunodeficiency virus type 1 group M subtype B (isolate HXB2)</name>
    <name type="common">HIV-1</name>
    <dbReference type="NCBI Taxonomy" id="11706"/>
    <lineage>
        <taxon>Viruses</taxon>
        <taxon>Riboviria</taxon>
        <taxon>Pararnavirae</taxon>
        <taxon>Artverviricota</taxon>
        <taxon>Revtraviricetes</taxon>
        <taxon>Ortervirales</taxon>
        <taxon>Retroviridae</taxon>
        <taxon>Orthoretrovirinae</taxon>
        <taxon>Lentivirus</taxon>
        <taxon>Human immunodeficiency virus type 1</taxon>
    </lineage>
</organism>
<keyword id="KW-0002">3D-structure</keyword>
<keyword id="KW-0014">AIDS</keyword>
<keyword id="KW-0053">Apoptosis</keyword>
<keyword id="KW-1165">Clathrin-mediated endocytosis of virus by host</keyword>
<keyword id="KW-0165">Cleavage on pair of basic residues</keyword>
<keyword id="KW-0175">Coiled coil</keyword>
<keyword id="KW-1015">Disulfide bond</keyword>
<keyword id="KW-1170">Fusion of virus membrane with host endosomal membrane</keyword>
<keyword id="KW-1168">Fusion of virus membrane with host membrane</keyword>
<keyword id="KW-0325">Glycoprotein</keyword>
<keyword id="KW-1032">Host cell membrane</keyword>
<keyword id="KW-1039">Host endosome</keyword>
<keyword id="KW-1043">Host membrane</keyword>
<keyword id="KW-0945">Host-virus interaction</keyword>
<keyword id="KW-0449">Lipoprotein</keyword>
<keyword id="KW-0472">Membrane</keyword>
<keyword id="KW-0564">Palmitate</keyword>
<keyword id="KW-1185">Reference proteome</keyword>
<keyword id="KW-0732">Signal</keyword>
<keyword id="KW-0812">Transmembrane</keyword>
<keyword id="KW-1133">Transmembrane helix</keyword>
<keyword id="KW-1161">Viral attachment to host cell</keyword>
<keyword id="KW-0261">Viral envelope protein</keyword>
<keyword id="KW-0899">Viral immunoevasion</keyword>
<keyword id="KW-1162">Viral penetration into host cytoplasm</keyword>
<keyword id="KW-0946">Virion</keyword>
<keyword id="KW-1164">Virus endocytosis by host</keyword>
<keyword id="KW-1160">Virus entry into host cell</keyword>
<feature type="signal peptide" evidence="1">
    <location>
        <begin position="1"/>
        <end position="32"/>
    </location>
</feature>
<feature type="chain" id="PRO_0000239240" description="Envelope glycoprotein gp160" evidence="1">
    <location>
        <begin position="33"/>
        <end position="856"/>
    </location>
</feature>
<feature type="chain" id="PRO_0000038427" description="Surface protein gp120" evidence="1">
    <location>
        <begin position="33"/>
        <end position="511"/>
    </location>
</feature>
<feature type="chain" id="PRO_0000038428" description="Transmembrane protein gp41" evidence="1">
    <location>
        <begin position="512"/>
        <end position="856"/>
    </location>
</feature>
<feature type="topological domain" description="Extracellular" evidence="1">
    <location>
        <begin position="33"/>
        <end position="684"/>
    </location>
</feature>
<feature type="transmembrane region" description="Helical" evidence="1">
    <location>
        <begin position="685"/>
        <end position="705"/>
    </location>
</feature>
<feature type="topological domain" description="Cytoplasmic" evidence="1">
    <location>
        <begin position="706"/>
        <end position="856"/>
    </location>
</feature>
<feature type="region of interest" description="V1" evidence="1">
    <location>
        <begin position="131"/>
        <end position="156"/>
    </location>
</feature>
<feature type="region of interest" description="V2" evidence="1">
    <location>
        <begin position="157"/>
        <end position="196"/>
    </location>
</feature>
<feature type="region of interest" description="V3" evidence="1">
    <location>
        <begin position="296"/>
        <end position="330"/>
    </location>
</feature>
<feature type="region of interest" description="CD4-binding loop" evidence="1">
    <location>
        <begin position="364"/>
        <end position="374"/>
    </location>
</feature>
<feature type="region of interest" description="V4" evidence="1">
    <location>
        <begin position="385"/>
        <end position="418"/>
    </location>
</feature>
<feature type="region of interest" description="V5">
    <location>
        <begin position="461"/>
        <end position="471"/>
    </location>
</feature>
<feature type="region of interest" description="V5" evidence="1">
    <location>
        <begin position="463"/>
        <end position="471"/>
    </location>
</feature>
<feature type="region of interest" description="Fusion peptide" evidence="1">
    <location>
        <begin position="512"/>
        <end position="532"/>
    </location>
</feature>
<feature type="region of interest" description="Immunosuppression" evidence="1 16">
    <location>
        <begin position="574"/>
        <end position="592"/>
    </location>
</feature>
<feature type="region of interest" description="MPER; binding to GalCer" evidence="1">
    <location>
        <begin position="662"/>
        <end position="683"/>
    </location>
</feature>
<feature type="region of interest" description="Disordered" evidence="2">
    <location>
        <begin position="718"/>
        <end position="742"/>
    </location>
</feature>
<feature type="coiled-coil region" evidence="1">
    <location>
        <begin position="633"/>
        <end position="667"/>
    </location>
</feature>
<feature type="short sequence motif" description="YXXL motif; contains endocytosis signal" evidence="1">
    <location>
        <begin position="712"/>
        <end position="715"/>
    </location>
</feature>
<feature type="short sequence motif" description="Di-leucine internalization motif" evidence="1">
    <location>
        <begin position="855"/>
        <end position="856"/>
    </location>
</feature>
<feature type="site" description="Cleavage; by host furin" evidence="1">
    <location>
        <begin position="511"/>
        <end position="512"/>
    </location>
</feature>
<feature type="lipid moiety-binding region" description="S-palmitoyl cysteine; by host" evidence="1 23">
    <location>
        <position position="764"/>
    </location>
</feature>
<feature type="lipid moiety-binding region" description="S-palmitoyl cysteine; by host" evidence="1 23">
    <location>
        <position position="837"/>
    </location>
</feature>
<feature type="glycosylation site" description="N-linked (GlcNAc...) asparagine; by host" evidence="1 13 19">
    <location>
        <position position="88"/>
    </location>
</feature>
<feature type="glycosylation site" description="N-linked (GlcNAc...) asparagine; by host" evidence="1">
    <location>
        <position position="136"/>
    </location>
</feature>
<feature type="glycosylation site" description="N-linked (GlcNAc...) asparagine; by host" evidence="1">
    <location>
        <position position="141"/>
    </location>
</feature>
<feature type="glycosylation site" description="N-linked (GlcNAc...) asparagine; by host" evidence="1 19">
    <location>
        <position position="156"/>
    </location>
</feature>
<feature type="glycosylation site" description="N-linked (GlcNAc...) asparagine; by host" evidence="1 19">
    <location>
        <position position="160"/>
    </location>
</feature>
<feature type="glycosylation site" description="N-linked (GlcNAc...) asparagine; by host" evidence="1">
    <location>
        <position position="186"/>
    </location>
</feature>
<feature type="glycosylation site" description="N-linked (GlcNAc...) asparagine; by host" evidence="1 4 9 19 24">
    <location>
        <position position="197"/>
    </location>
</feature>
<feature type="glycosylation site" description="N-linked (GlcNAc...) asparagine; by host" evidence="1">
    <location>
        <position position="230"/>
    </location>
</feature>
<feature type="glycosylation site" description="N-linked (GlcNAc...) asparagine; by host" evidence="1 4 9 19">
    <location>
        <position position="234"/>
    </location>
</feature>
<feature type="glycosylation site" description="N-linked (GlcNAc...) asparagine; by host" evidence="1">
    <location>
        <position position="241"/>
    </location>
</feature>
<feature type="glycosylation site" description="N-linked (GlcNAc...) asparagine; by host" evidence="1 4 9 17 19 24">
    <location>
        <position position="262"/>
    </location>
</feature>
<feature type="glycosylation site" description="N-linked (GlcNAc...) asparagine; by host" evidence="1 4 9 19 24">
    <location>
        <position position="276"/>
    </location>
</feature>
<feature type="glycosylation site" description="N-linked (GlcNAc...) asparagine; by host" evidence="1 4 9 24">
    <location>
        <position position="289"/>
    </location>
</feature>
<feature type="glycosylation site" description="N-linked (GlcNAc...) asparagine; by host" evidence="1 4 9 19 24">
    <location>
        <position position="295"/>
    </location>
</feature>
<feature type="glycosylation site" description="N-linked (GlcNAc...) asparagine; by host" evidence="1">
    <location>
        <position position="301"/>
    </location>
</feature>
<feature type="glycosylation site" description="N-linked (GlcNAc...) asparagine; by host" evidence="1 14 19 24">
    <location>
        <position position="332"/>
    </location>
</feature>
<feature type="glycosylation site" description="N-linked (GlcNAc...) asparagine; by host" evidence="1 4 19 24">
    <location>
        <position position="339"/>
    </location>
</feature>
<feature type="glycosylation site" description="N-linked (GlcNAc...) asparagine; by host" evidence="1 10 13 25 26 27">
    <location>
        <position position="356"/>
    </location>
</feature>
<feature type="glycosylation site" description="N-linked (GlcNAc...) asparagine; by host" evidence="1 4 19 24">
    <location>
        <position position="386"/>
    </location>
</feature>
<feature type="glycosylation site" description="N-linked (GlcNAc...) asparagine; by host" evidence="1 4 9 19 24">
    <location>
        <position position="392"/>
    </location>
</feature>
<feature type="glycosylation site" description="N-linked (GlcNAc...) asparagine; by host" evidence="1">
    <location>
        <position position="397"/>
    </location>
</feature>
<feature type="glycosylation site" description="N-linked (GlcNAc...) asparagine; by host" evidence="1">
    <location>
        <position position="406"/>
    </location>
</feature>
<feature type="glycosylation site" description="N-linked (GlcNAc...) asparagine; by host" evidence="1 4 9 19 24">
    <location>
        <position position="448"/>
    </location>
</feature>
<feature type="glycosylation site" description="N-linked (GlcNAc...) asparagine; by host" evidence="1 4 9">
    <location>
        <position position="463"/>
    </location>
</feature>
<feature type="glycosylation site" description="N-linked (GlcNAc...) asparagine; by host" evidence="1 19">
    <location>
        <position position="611"/>
    </location>
</feature>
<feature type="glycosylation site" description="N-linked (GlcNAc...) asparagine; by host" evidence="1">
    <location>
        <position position="616"/>
    </location>
</feature>
<feature type="glycosylation site" description="N-linked (GlcNAc...) asparagine; by host" evidence="1">
    <location>
        <position position="624"/>
    </location>
</feature>
<feature type="glycosylation site" description="N-linked (GlcNAc...) asparagine; by host" evidence="1 19">
    <location>
        <position position="637"/>
    </location>
</feature>
<feature type="glycosylation site" description="N-linked (GlcNAc...) asparagine; by host" evidence="1">
    <location>
        <position position="674"/>
    </location>
</feature>
<feature type="disulfide bond" evidence="1">
    <location>
        <begin position="54"/>
        <end position="74"/>
    </location>
</feature>
<feature type="disulfide bond" evidence="1">
    <location>
        <begin position="119"/>
        <end position="205"/>
    </location>
</feature>
<feature type="disulfide bond" evidence="1">
    <location>
        <begin position="126"/>
        <end position="196"/>
    </location>
</feature>
<feature type="disulfide bond" evidence="1">
    <location>
        <begin position="131"/>
        <end position="157"/>
    </location>
</feature>
<feature type="disulfide bond" evidence="1">
    <location>
        <begin position="218"/>
        <end position="247"/>
    </location>
</feature>
<feature type="disulfide bond" evidence="1">
    <location>
        <begin position="228"/>
        <end position="239"/>
    </location>
</feature>
<feature type="disulfide bond" evidence="1">
    <location>
        <begin position="296"/>
        <end position="331"/>
    </location>
</feature>
<feature type="disulfide bond" evidence="1">
    <location>
        <begin position="378"/>
        <end position="445"/>
    </location>
</feature>
<feature type="disulfide bond" evidence="1">
    <location>
        <begin position="385"/>
        <end position="418"/>
    </location>
</feature>
<feature type="disulfide bond" evidence="1">
    <location>
        <begin position="598"/>
        <end position="604"/>
    </location>
</feature>
<feature type="mutagenesis site" description="Complete loss of palmitoylation, decreased association with host cell membrane lipid rafts, decreased incorporation onto virions and severe reduction of infectivity; when associated with S-837." evidence="23">
    <original>C</original>
    <variation>S</variation>
    <location>
        <position position="764"/>
    </location>
</feature>
<feature type="mutagenesis site" description="Complete loss of palmitoylation, decreased association with host cell membrane lipid rafts, decreased incorporation onto virions and severe reduction of infectivity; when associated with S-764." evidence="23">
    <original>C</original>
    <variation>S</variation>
    <location>
        <position position="837"/>
    </location>
</feature>
<feature type="strand" evidence="45">
    <location>
        <begin position="53"/>
        <end position="55"/>
    </location>
</feature>
<feature type="strand" evidence="29">
    <location>
        <begin position="84"/>
        <end position="93"/>
    </location>
</feature>
<feature type="turn" evidence="33">
    <location>
        <begin position="95"/>
        <end position="98"/>
    </location>
</feature>
<feature type="helix" evidence="29">
    <location>
        <begin position="99"/>
        <end position="113"/>
    </location>
</feature>
<feature type="strand" evidence="29">
    <location>
        <begin position="119"/>
        <end position="123"/>
    </location>
</feature>
<feature type="strand" evidence="29">
    <location>
        <begin position="199"/>
        <end position="201"/>
    </location>
</feature>
<feature type="strand" evidence="33">
    <location>
        <begin position="210"/>
        <end position="212"/>
    </location>
</feature>
<feature type="strand" evidence="45">
    <location>
        <begin position="215"/>
        <end position="218"/>
    </location>
</feature>
<feature type="strand" evidence="29">
    <location>
        <begin position="223"/>
        <end position="228"/>
    </location>
</feature>
<feature type="strand" evidence="29">
    <location>
        <begin position="235"/>
        <end position="247"/>
    </location>
</feature>
<feature type="strand" evidence="33">
    <location>
        <begin position="251"/>
        <end position="254"/>
    </location>
</feature>
<feature type="strand" evidence="29">
    <location>
        <begin position="256"/>
        <end position="258"/>
    </location>
</feature>
<feature type="strand" evidence="29">
    <location>
        <begin position="260"/>
        <end position="262"/>
    </location>
</feature>
<feature type="strand" evidence="29">
    <location>
        <begin position="267"/>
        <end position="269"/>
    </location>
</feature>
<feature type="strand" evidence="29">
    <location>
        <begin position="271"/>
        <end position="273"/>
    </location>
</feature>
<feature type="strand" evidence="30">
    <location>
        <begin position="277"/>
        <end position="279"/>
    </location>
</feature>
<feature type="strand" evidence="36">
    <location>
        <begin position="280"/>
        <end position="282"/>
    </location>
</feature>
<feature type="strand" evidence="29">
    <location>
        <begin position="284"/>
        <end position="297"/>
    </location>
</feature>
<feature type="strand" evidence="36">
    <location>
        <begin position="303"/>
        <end position="305"/>
    </location>
</feature>
<feature type="turn" evidence="29">
    <location>
        <begin position="312"/>
        <end position="314"/>
    </location>
</feature>
<feature type="strand" evidence="29">
    <location>
        <begin position="330"/>
        <end position="334"/>
    </location>
</feature>
<feature type="helix" evidence="29">
    <location>
        <begin position="335"/>
        <end position="352"/>
    </location>
</feature>
<feature type="strand" evidence="29">
    <location>
        <begin position="359"/>
        <end position="361"/>
    </location>
</feature>
<feature type="helix" evidence="29">
    <location>
        <begin position="369"/>
        <end position="372"/>
    </location>
</feature>
<feature type="strand" evidence="29">
    <location>
        <begin position="374"/>
        <end position="378"/>
    </location>
</feature>
<feature type="strand" evidence="29">
    <location>
        <begin position="381"/>
        <end position="385"/>
    </location>
</feature>
<feature type="helix" evidence="29">
    <location>
        <begin position="388"/>
        <end position="390"/>
    </location>
</feature>
<feature type="strand" evidence="29">
    <location>
        <begin position="393"/>
        <end position="395"/>
    </location>
</feature>
<feature type="strand" evidence="29">
    <location>
        <begin position="413"/>
        <end position="417"/>
    </location>
</feature>
<feature type="strand" evidence="29">
    <location>
        <begin position="420"/>
        <end position="425"/>
    </location>
</feature>
<feature type="strand" evidence="29">
    <location>
        <begin position="427"/>
        <end position="430"/>
    </location>
</feature>
<feature type="strand" evidence="29">
    <location>
        <begin position="432"/>
        <end position="434"/>
    </location>
</feature>
<feature type="turn" evidence="34">
    <location>
        <begin position="440"/>
        <end position="442"/>
    </location>
</feature>
<feature type="strand" evidence="29">
    <location>
        <begin position="444"/>
        <end position="456"/>
    </location>
</feature>
<feature type="strand" evidence="29">
    <location>
        <begin position="466"/>
        <end position="470"/>
    </location>
</feature>
<feature type="helix" evidence="29">
    <location>
        <begin position="475"/>
        <end position="483"/>
    </location>
</feature>
<feature type="strand" evidence="29">
    <location>
        <begin position="486"/>
        <end position="490"/>
    </location>
</feature>
<feature type="helix" evidence="39">
    <location>
        <begin position="514"/>
        <end position="516"/>
    </location>
</feature>
<feature type="helix" evidence="38">
    <location>
        <begin position="525"/>
        <end position="528"/>
    </location>
</feature>
<feature type="helix" evidence="46">
    <location>
        <begin position="540"/>
        <end position="580"/>
    </location>
</feature>
<feature type="helix" evidence="37">
    <location>
        <begin position="583"/>
        <end position="594"/>
    </location>
</feature>
<feature type="strand" evidence="44">
    <location>
        <begin position="597"/>
        <end position="601"/>
    </location>
</feature>
<feature type="helix" evidence="44">
    <location>
        <begin position="604"/>
        <end position="606"/>
    </location>
</feature>
<feature type="helix" evidence="31">
    <location>
        <begin position="626"/>
        <end position="628"/>
    </location>
</feature>
<feature type="helix" evidence="28">
    <location>
        <begin position="629"/>
        <end position="650"/>
    </location>
</feature>
<feature type="helix" evidence="35">
    <location>
        <begin position="657"/>
        <end position="667"/>
    </location>
</feature>
<feature type="turn" evidence="38">
    <location>
        <begin position="668"/>
        <end position="670"/>
    </location>
</feature>
<feature type="helix" evidence="41">
    <location>
        <begin position="672"/>
        <end position="674"/>
    </location>
</feature>
<feature type="helix" evidence="41">
    <location>
        <begin position="675"/>
        <end position="683"/>
    </location>
</feature>
<feature type="helix" evidence="32">
    <location>
        <begin position="690"/>
        <end position="693"/>
    </location>
</feature>
<feature type="helix" evidence="42">
    <location>
        <begin position="698"/>
        <end position="709"/>
    </location>
</feature>
<feature type="strand" evidence="40">
    <location>
        <begin position="712"/>
        <end position="714"/>
    </location>
</feature>
<feature type="helix" evidence="40">
    <location>
        <begin position="742"/>
        <end position="745"/>
    </location>
</feature>
<feature type="helix" evidence="40">
    <location>
        <begin position="748"/>
        <end position="763"/>
    </location>
</feature>
<feature type="strand" evidence="40">
    <location>
        <begin position="766"/>
        <end position="769"/>
    </location>
</feature>
<feature type="helix" evidence="40">
    <location>
        <begin position="771"/>
        <end position="786"/>
    </location>
</feature>
<feature type="helix" evidence="43">
    <location>
        <begin position="788"/>
        <end position="790"/>
    </location>
</feature>
<feature type="helix" evidence="42">
    <location>
        <begin position="791"/>
        <end position="820"/>
    </location>
</feature>
<feature type="strand" evidence="42">
    <location>
        <begin position="822"/>
        <end position="824"/>
    </location>
</feature>
<feature type="helix" evidence="42">
    <location>
        <begin position="826"/>
        <end position="841"/>
    </location>
</feature>
<feature type="helix" evidence="42">
    <location>
        <begin position="847"/>
        <end position="854"/>
    </location>
</feature>
<gene>
    <name evidence="1" type="primary">env</name>
</gene>
<evidence type="ECO:0000255" key="1">
    <source>
        <dbReference type="HAMAP-Rule" id="MF_04083"/>
    </source>
</evidence>
<evidence type="ECO:0000256" key="2">
    <source>
        <dbReference type="SAM" id="MobiDB-lite"/>
    </source>
</evidence>
<evidence type="ECO:0000269" key="3">
    <source>
    </source>
</evidence>
<evidence type="ECO:0000269" key="4">
    <source>
    </source>
</evidence>
<evidence type="ECO:0000269" key="5">
    <source>
    </source>
</evidence>
<evidence type="ECO:0000269" key="6">
    <source>
    </source>
</evidence>
<evidence type="ECO:0000269" key="7">
    <source>
    </source>
</evidence>
<evidence type="ECO:0000269" key="8">
    <source>
    </source>
</evidence>
<evidence type="ECO:0000269" key="9">
    <source>
    </source>
</evidence>
<evidence type="ECO:0000269" key="10">
    <source>
    </source>
</evidence>
<evidence type="ECO:0000269" key="11">
    <source>
    </source>
</evidence>
<evidence type="ECO:0000269" key="12">
    <source>
    </source>
</evidence>
<evidence type="ECO:0000269" key="13">
    <source>
    </source>
</evidence>
<evidence type="ECO:0000269" key="14">
    <source>
    </source>
</evidence>
<evidence type="ECO:0000269" key="15">
    <source>
    </source>
</evidence>
<evidence type="ECO:0000269" key="16">
    <source>
    </source>
</evidence>
<evidence type="ECO:0000269" key="17">
    <source>
    </source>
</evidence>
<evidence type="ECO:0000269" key="18">
    <source>
    </source>
</evidence>
<evidence type="ECO:0000269" key="19">
    <source>
    </source>
</evidence>
<evidence type="ECO:0000269" key="20">
    <source>
    </source>
</evidence>
<evidence type="ECO:0000269" key="21">
    <source>
    </source>
</evidence>
<evidence type="ECO:0000269" key="22">
    <source>
    </source>
</evidence>
<evidence type="ECO:0000269" key="23">
    <source>
    </source>
</evidence>
<evidence type="ECO:0000269" key="24">
    <source>
    </source>
</evidence>
<evidence type="ECO:0007744" key="25">
    <source>
        <dbReference type="PDB" id="2NY7"/>
    </source>
</evidence>
<evidence type="ECO:0007744" key="26">
    <source>
        <dbReference type="PDB" id="3IDX"/>
    </source>
</evidence>
<evidence type="ECO:0007744" key="27">
    <source>
        <dbReference type="PDB" id="3IDY"/>
    </source>
</evidence>
<evidence type="ECO:0007829" key="28">
    <source>
        <dbReference type="PDB" id="1DF4"/>
    </source>
</evidence>
<evidence type="ECO:0007829" key="29">
    <source>
        <dbReference type="PDB" id="1G9M"/>
    </source>
</evidence>
<evidence type="ECO:0007829" key="30">
    <source>
        <dbReference type="PDB" id="1GC1"/>
    </source>
</evidence>
<evidence type="ECO:0007829" key="31">
    <source>
        <dbReference type="PDB" id="1K33"/>
    </source>
</evidence>
<evidence type="ECO:0007829" key="32">
    <source>
        <dbReference type="PDB" id="2MG3"/>
    </source>
</evidence>
<evidence type="ECO:0007829" key="33">
    <source>
        <dbReference type="PDB" id="2NY7"/>
    </source>
</evidence>
<evidence type="ECO:0007829" key="34">
    <source>
        <dbReference type="PDB" id="3IDX"/>
    </source>
</evidence>
<evidence type="ECO:0007829" key="35">
    <source>
        <dbReference type="PDB" id="3MNZ"/>
    </source>
</evidence>
<evidence type="ECO:0007829" key="36">
    <source>
        <dbReference type="PDB" id="3TYG"/>
    </source>
</evidence>
<evidence type="ECO:0007829" key="37">
    <source>
        <dbReference type="PDB" id="5HM1"/>
    </source>
</evidence>
<evidence type="ECO:0007829" key="38">
    <source>
        <dbReference type="PDB" id="5NVP"/>
    </source>
</evidence>
<evidence type="ECO:0007829" key="39">
    <source>
        <dbReference type="PDB" id="5TKK"/>
    </source>
</evidence>
<evidence type="ECO:0007829" key="40">
    <source>
        <dbReference type="PDB" id="6UJU"/>
    </source>
</evidence>
<evidence type="ECO:0007829" key="41">
    <source>
        <dbReference type="PDB" id="7EKB"/>
    </source>
</evidence>
<evidence type="ECO:0007829" key="42">
    <source>
        <dbReference type="PDB" id="7LOH"/>
    </source>
</evidence>
<evidence type="ECO:0007829" key="43">
    <source>
        <dbReference type="PDB" id="7LOI"/>
    </source>
</evidence>
<evidence type="ECO:0007829" key="44">
    <source>
        <dbReference type="PDB" id="7N05"/>
    </source>
</evidence>
<evidence type="ECO:0007829" key="45">
    <source>
        <dbReference type="PDB" id="7R74"/>
    </source>
</evidence>
<evidence type="ECO:0007829" key="46">
    <source>
        <dbReference type="PDB" id="8F3A"/>
    </source>
</evidence>
<comment type="function">
    <molecule>Envelope glycoprotein gp160</molecule>
    <text evidence="1 8 18 21">Oligomerizes in the host endoplasmic reticulum into predominantly trimers. In a second time, gp160 transits in the host Golgi, where glycosylation is completed. The precursor is then proteolytically cleaved in the trans-Golgi and thereby activated by cellular furin or furin-like proteases to produce gp120 and gp41.</text>
</comment>
<comment type="function">
    <molecule>Surface protein gp120</molecule>
    <text evidence="1 5 12">Attaches the virus to the host lymphoid cell by binding to the primary receptor CD4. This interaction induces a structural rearrangement creating a high affinity binding site for a chemokine coreceptor like CXCR4 and/or CCR5. Acts as a ligand for CD209/DC-SIGN and CLEC4M/DC-SIGNR, which are respectively found on dendritic cells (DCs), and on endothelial cells of liver sinusoids and lymph node sinuses. These interactions allow capture of viral particles at mucosal surfaces by these cells and subsequent transmission to permissive cells. HIV subverts the migration properties of dendritic cells to gain access to CD4+ T-cells in lymph nodes. Virus transmission to permissive T-cells occurs either in trans (without DCs infection, through viral capture and transmission), or in cis (following DCs productive infection, through the usual CD4-gp120 interaction), thereby inducing a robust infection. In trans infection, bound virions remain infectious over days and it is proposed that they are not degraded, but protected in non-lysosomal acidic organelles within the DCs close to the cell membrane thus contributing to the viral infectious potential during DCs' migration from the periphery to the lymphoid tissues. On arrival at lymphoid tissues, intact virions recycle back to DCs' cell surface allowing virus transmission to CD4+ T-cells.</text>
</comment>
<comment type="function">
    <molecule>Transmembrane protein gp41</molecule>
    <text evidence="1 12 15">Acts as a class I viral fusion protein. Under the current model, the protein has at least 3 conformational states: pre-fusion native state, pre-hairpin intermediate state, and post-fusion hairpin state. During fusion of viral and target intracellular membranes, the coiled coil regions (heptad repeats) assume a trimer-of-hairpins structure, positioning the fusion peptide in close proximity to the C-terminal region of the ectodomain. The formation of this structure appears to drive apposition and subsequent fusion of viral and target cell membranes. Complete fusion occurs in host cell endosomes and is dynamin-dependent, however some lipid transfer might occur at the plasma membrane. The virus undergoes clathrin-dependent internalization long before endosomal fusion, thus minimizing the surface exposure of conserved viral epitopes during fusion and reducing the efficacy of inhibitors targeting these epitopes. Membranes fusion leads to delivery of the nucleocapsid into the cytoplasm.</text>
</comment>
<comment type="subunit">
    <molecule>Surface protein gp120</molecule>
    <text evidence="1 7 11 22">The mature envelope protein (Env) consists of a homotrimer of non-covalently associated gp120-gp41 heterodimers. The resulting complex protrudes from the virus surface as a spike. There seems to be as few as 10 spikes on the average virion. Interacts with host CD4, CCR5 and CXCR4. Gp120 also interacts with the C-type lectins CD209/DC-SIGN and CLEC4M/DC-SIGNR (collectively referred to as DC-SIGN(R)). Gp120 and gp41 interact with GalCer. Gp120 interacts with host ITGA4/ITGB7 complex; on CD4+ T-cells, this interaction results in rapid activation of integrin ITGAL/LFA-1, which facilitates efficient cell-to-cell spreading of HIV-1. Gp120 interacts with cell-associated heparan sulfate; this interaction increases virus infectivity on permissive cells and may be involved in infection of CD4- cells.</text>
</comment>
<comment type="subunit">
    <molecule>Transmembrane protein gp41</molecule>
    <text evidence="1 7 11 22">The mature envelope protein (Env) consists of a homotrimer of non-covalently associated gp120-gp41 heterodimers. The resulting complex protrudes from the virus surface as a spike. There seems to be as few as 10 spikes on the average virion.</text>
</comment>
<comment type="interaction">
    <interactant intactId="EBI-6163496">
        <id>P04578</id>
    </interactant>
    <interactant intactId="EBI-6164389">
        <id>P04608</id>
        <label>tat</label>
    </interactant>
    <organismsDiffer>false</organismsDiffer>
    <experiments>4</experiments>
</comment>
<comment type="interaction">
    <interactant intactId="EBI-6163496">
        <id>P04578</id>
    </interactant>
    <interactant intactId="EBI-355947">
        <id>P27824</id>
        <label>CANX</label>
    </interactant>
    <organismsDiffer>true</organismsDiffer>
    <experiments>3</experiments>
</comment>
<comment type="interaction">
    <interactant intactId="EBI-6163496">
        <id>P04578</id>
    </interactant>
    <interactant intactId="EBI-353826">
        <id>P01730</id>
        <label>CD4</label>
    </interactant>
    <organismsDiffer>true</organismsDiffer>
    <experiments>2</experiments>
</comment>
<comment type="interaction">
    <interactant intactId="EBI-6163496">
        <id>P04578</id>
    </interactant>
    <interactant intactId="EBI-8079227">
        <id>Q9ULD8</id>
        <label>KCNH3</label>
    </interactant>
    <organismsDiffer>true</organismsDiffer>
    <experiments>3</experiments>
</comment>
<comment type="interaction">
    <interactant intactId="EBI-6179761">
        <id>PRO_0000038427</id>
    </interactant>
    <interactant intactId="EBI-353826">
        <id>P01730</id>
        <label>CD4</label>
    </interactant>
    <organismsDiffer>true</organismsDiffer>
    <experiments>3</experiments>
</comment>
<comment type="interaction">
    <interactant intactId="EBI-6179711">
        <id>PRO_0000038428</id>
    </interactant>
    <interactant intactId="EBI-6179711">
        <id>PRO_0000038428</id>
        <label>env</label>
        <dbReference type="UniProtKB" id="P04578"/>
    </interactant>
    <organismsDiffer>false</organismsDiffer>
    <experiments>2</experiments>
</comment>
<comment type="interaction">
    <interactant intactId="EBI-6179711">
        <id>PRO_0000038428</id>
    </interactant>
    <interactant intactId="EBI-762053">
        <id>P08962</id>
        <label>CD63</label>
    </interactant>
    <organismsDiffer>true</organismsDiffer>
    <experiments>4</experiments>
</comment>
<comment type="subcellular location">
    <molecule>Surface protein gp120</molecule>
    <subcellularLocation>
        <location evidence="1">Virion membrane</location>
        <topology evidence="1">Peripheral membrane protein</topology>
    </subcellularLocation>
    <subcellularLocation>
        <location evidence="1">Host cell membrane</location>
        <topology evidence="1">Peripheral membrane protein</topology>
    </subcellularLocation>
    <subcellularLocation>
        <location evidence="1">Host endosome membrane</location>
        <topology evidence="1">Single-pass type I membrane protein</topology>
    </subcellularLocation>
    <text evidence="1">The surface protein is not anchored to the viral envelope, but associates with the extravirion surface through its binding to TM. It is probably concentrated at the site of budding and incorporated into the virions possibly by contacts between the cytoplasmic tail of Env and the N-terminus of Gag.</text>
</comment>
<comment type="subcellular location">
    <molecule>Transmembrane protein gp41</molecule>
    <subcellularLocation>
        <location evidence="1">Virion membrane</location>
        <topology evidence="1">Single-pass type I membrane protein</topology>
    </subcellularLocation>
    <subcellularLocation>
        <location evidence="1">Host cell membrane</location>
        <topology evidence="1">Single-pass type I membrane protein</topology>
    </subcellularLocation>
    <subcellularLocation>
        <location evidence="1">Host endosome membrane</location>
        <topology evidence="1">Single-pass type I membrane protein</topology>
    </subcellularLocation>
    <text evidence="1">It is probably concentrated at the site of budding and incorporated into the virions possibly by contacts between the cytoplasmic tail of Env and the N-terminus of Gag.</text>
</comment>
<comment type="domain">
    <text evidence="1 3">Some of the most genetically diverse regions of the viral genome are present in Env. They are called variable regions 1 through 5 (V1 through V5). Coreceptor usage of gp120 is determined mainly by the primary structure of the third variable region (V3) in the outer domain of gp120. The sequence of V3 determines which coreceptor, CCR5 and/or CXCR4 (corresponding to R5/macrophage, X4/T cell and R5X4/T cell and macrophage tropism), is used to trigger the fusion potential of the Env complex, and hence which cells the virus can infect. Binding to CCR5 involves a region adjacent in addition to V3.</text>
</comment>
<comment type="domain">
    <text evidence="1 3">The membrane proximal external region (MPER) present in gp41 is a tryptophan-rich region recognized by the antibodies 2F5, Z13, and 4E10. MPER seems to play a role in fusion.</text>
</comment>
<comment type="domain">
    <text evidence="1 16">The 17 amino acids long immunosuppressive region is present in many retroviral envelope proteins. Synthetic peptides derived from this relatively conserved sequence inhibit immune function in vitro and in vivo.</text>
</comment>
<comment type="domain">
    <text evidence="1 3">The YXXL motif is involved in determining the exact site of viral release at the surface of infected mononuclear cells and promotes endocytosis. YXXL and di-leucine endocytosis motifs interact directly or indirectly with the clathrin adapter complexes, opperate independently, and their activities are not additive.</text>
</comment>
<comment type="domain">
    <text evidence="1 3">The CD4-binding region is targeted by the antibody b12.</text>
</comment>
<comment type="PTM">
    <text evidence="1 23">Palmitoylation of the transmembrane protein and of Env polyprotein (prior to its proteolytic cleavage) is essential for their association with host cell membrane lipid rafts. Palmitoylation is therefore required for envelope trafficking to classical lipid rafts, but not for viral replication.</text>
</comment>
<comment type="PTM">
    <text evidence="1 19 20">Highly glycosylated by host. The high number of glycan on the protein is reffered to as 'glycan shield' because it contributes to hide protein sequence from adaptive immune system.</text>
</comment>
<comment type="PTM">
    <text evidence="1 6 18 21">Specific enzymatic cleavages in vivo yield mature proteins. Envelope glycoproteins are synthesized as an inactive precursor that is heavily N-glycosylated and processed likely by host cell furin in the Golgi to yield the mature SU and TM proteins. The cleavage site between SU and TM requires the minimal sequence [KR]-X-[KR]-R. About 2 of the 9 disulfide bonds of gp41 are reduced by P4HB/PDI, following binding to CD4 receptor.</text>
</comment>
<comment type="miscellaneous">
    <text evidence="1">Inhibitors targeting HIV-1 viral envelope proteins are used as antiretroviral drugs. Attachment of virions to the cell surface via non-specific interactions and CD4 binding can be blocked by inhibitors that include cyanovirin-N, cyclotriazadisulfonamide analogs, PRO 2000, TNX 355 and PRO 542. In addition, BMS 806 can block CD4-induced conformational changes. Env interactions with the coreceptor molecules can be targeted by CCR5 antagonists including SCH-D, maraviroc (UK 427857) and aplaviroc (GW 873140), and the CXCR4 antagonist AMD 070. Fusion of viral and cellular membranes can be inhibited by peptides such as enfuvirtide and tifuvirtide (T 1249). Resistance to inhibitors associated with mutations in Env are observed. Most of the time, single mutations confer only a modest reduction in drug susceptibility. Combination of several mutations is usually required to develop a high-level drug resistance.</text>
</comment>
<comment type="miscellaneous">
    <text evidence="1">HIV-1 lineages are divided in three main groups, M (for Major), O (for Outlier), and N (for New, or Non-M, Non-O). The vast majority of strains found worldwide belong to the group M. Group O seems to be endemic to and largely confined to Cameroon and neighboring countries in West Central Africa, where these viruses represent a small minority of HIV-1 strains. The group N is represented by a limited number of isolates from Cameroonian persons. The group M is further subdivided in 9 clades or subtypes (A to D, F to H, J and K).</text>
</comment>
<comment type="similarity">
    <text evidence="1">Belongs to the HIV-1 env protein family.</text>
</comment>
<comment type="online information" name="hivdb">
    <link uri="https://hivdb.stanford.edu"/>
    <text>HIV drug resistance database</text>
</comment>
<comment type="online information" name="HIV drug resistance mutations">
    <link uri="https://www.iasusa.org/hiv-drug-resistance/hiv-drug-resistance-mutations/"/>
</comment>
<name>ENV_HV1H2</name>
<proteinExistence type="evidence at protein level"/>
<accession>P04578</accession>
<accession>O09779</accession>